<organism>
    <name type="scientific">Homo sapiens</name>
    <name type="common">Human</name>
    <dbReference type="NCBI Taxonomy" id="9606"/>
    <lineage>
        <taxon>Eukaryota</taxon>
        <taxon>Metazoa</taxon>
        <taxon>Chordata</taxon>
        <taxon>Craniata</taxon>
        <taxon>Vertebrata</taxon>
        <taxon>Euteleostomi</taxon>
        <taxon>Mammalia</taxon>
        <taxon>Eutheria</taxon>
        <taxon>Euarchontoglires</taxon>
        <taxon>Primates</taxon>
        <taxon>Haplorrhini</taxon>
        <taxon>Catarrhini</taxon>
        <taxon>Hominidae</taxon>
        <taxon>Homo</taxon>
    </lineage>
</organism>
<reference key="1">
    <citation type="journal article" date="1989" name="Mol. Cell. Biol.">
        <title>Molecular and biochemical characterization of the human trk proto-oncogene.</title>
        <authorList>
            <person name="Martin-Zanca D."/>
            <person name="Oskam R."/>
            <person name="Mitra G."/>
            <person name="Copeland T.D."/>
            <person name="Barbacid M."/>
        </authorList>
    </citation>
    <scope>NUCLEOTIDE SEQUENCE [MRNA] (ISOFORM TRKA-I)</scope>
    <scope>CATALYTIC ACTIVITY</scope>
    <scope>PHOSPHORYLATION</scope>
    <scope>GLYCOSYLATION</scope>
    <scope>SUBCELLULAR LOCATION</scope>
    <source>
        <tissue>Colon</tissue>
    </source>
</reference>
<reference key="2">
    <citation type="journal article" date="1995" name="J. Neurosci.">
        <title>Human trks: molecular cloning, tissue distribution, and expression of extracellular domain immunoadhesins.</title>
        <authorList>
            <person name="Shelton D.L."/>
            <person name="Sutherland J."/>
            <person name="Gripp J."/>
            <person name="Camerato T."/>
            <person name="Armanini M.P."/>
            <person name="Phillips H.S."/>
            <person name="Carroll K."/>
            <person name="Spencer S.D."/>
            <person name="Levinson A.D."/>
        </authorList>
    </citation>
    <scope>NUCLEOTIDE SEQUENCE [MRNA]</scope>
    <source>
        <tissue>Brain</tissue>
    </source>
</reference>
<reference key="3">
    <citation type="journal article" date="1997" name="Jpn. J. Hum. Genet.">
        <title>Structure and organization of the human TRKA gene encoding a high affinity receptor for nerve growth factor.</title>
        <authorList>
            <person name="Indo Y."/>
            <person name="Mardy S."/>
            <person name="Tsuruta M."/>
            <person name="Karim M.A."/>
            <person name="Matsuda I."/>
        </authorList>
    </citation>
    <scope>NUCLEOTIDE SEQUENCE [GENOMIC DNA]</scope>
</reference>
<reference key="4">
    <citation type="journal article" date="2004" name="Nat. Genet.">
        <title>Complete sequencing and characterization of 21,243 full-length human cDNAs.</title>
        <authorList>
            <person name="Ota T."/>
            <person name="Suzuki Y."/>
            <person name="Nishikawa T."/>
            <person name="Otsuki T."/>
            <person name="Sugiyama T."/>
            <person name="Irie R."/>
            <person name="Wakamatsu A."/>
            <person name="Hayashi K."/>
            <person name="Sato H."/>
            <person name="Nagai K."/>
            <person name="Kimura K."/>
            <person name="Makita H."/>
            <person name="Sekine M."/>
            <person name="Obayashi M."/>
            <person name="Nishi T."/>
            <person name="Shibahara T."/>
            <person name="Tanaka T."/>
            <person name="Ishii S."/>
            <person name="Yamamoto J."/>
            <person name="Saito K."/>
            <person name="Kawai Y."/>
            <person name="Isono Y."/>
            <person name="Nakamura Y."/>
            <person name="Nagahari K."/>
            <person name="Murakami K."/>
            <person name="Yasuda T."/>
            <person name="Iwayanagi T."/>
            <person name="Wagatsuma M."/>
            <person name="Shiratori A."/>
            <person name="Sudo H."/>
            <person name="Hosoiri T."/>
            <person name="Kaku Y."/>
            <person name="Kodaira H."/>
            <person name="Kondo H."/>
            <person name="Sugawara M."/>
            <person name="Takahashi M."/>
            <person name="Kanda K."/>
            <person name="Yokoi T."/>
            <person name="Furuya T."/>
            <person name="Kikkawa E."/>
            <person name="Omura Y."/>
            <person name="Abe K."/>
            <person name="Kamihara K."/>
            <person name="Katsuta N."/>
            <person name="Sato K."/>
            <person name="Tanikawa M."/>
            <person name="Yamazaki M."/>
            <person name="Ninomiya K."/>
            <person name="Ishibashi T."/>
            <person name="Yamashita H."/>
            <person name="Murakawa K."/>
            <person name="Fujimori K."/>
            <person name="Tanai H."/>
            <person name="Kimata M."/>
            <person name="Watanabe M."/>
            <person name="Hiraoka S."/>
            <person name="Chiba Y."/>
            <person name="Ishida S."/>
            <person name="Ono Y."/>
            <person name="Takiguchi S."/>
            <person name="Watanabe S."/>
            <person name="Yosida M."/>
            <person name="Hotuta T."/>
            <person name="Kusano J."/>
            <person name="Kanehori K."/>
            <person name="Takahashi-Fujii A."/>
            <person name="Hara H."/>
            <person name="Tanase T.-O."/>
            <person name="Nomura Y."/>
            <person name="Togiya S."/>
            <person name="Komai F."/>
            <person name="Hara R."/>
            <person name="Takeuchi K."/>
            <person name="Arita M."/>
            <person name="Imose N."/>
            <person name="Musashino K."/>
            <person name="Yuuki H."/>
            <person name="Oshima A."/>
            <person name="Sasaki N."/>
            <person name="Aotsuka S."/>
            <person name="Yoshikawa Y."/>
            <person name="Matsunawa H."/>
            <person name="Ichihara T."/>
            <person name="Shiohata N."/>
            <person name="Sano S."/>
            <person name="Moriya S."/>
            <person name="Momiyama H."/>
            <person name="Satoh N."/>
            <person name="Takami S."/>
            <person name="Terashima Y."/>
            <person name="Suzuki O."/>
            <person name="Nakagawa S."/>
            <person name="Senoh A."/>
            <person name="Mizoguchi H."/>
            <person name="Goto Y."/>
            <person name="Shimizu F."/>
            <person name="Wakebe H."/>
            <person name="Hishigaki H."/>
            <person name="Watanabe T."/>
            <person name="Sugiyama A."/>
            <person name="Takemoto M."/>
            <person name="Kawakami B."/>
            <person name="Yamazaki M."/>
            <person name="Watanabe K."/>
            <person name="Kumagai A."/>
            <person name="Itakura S."/>
            <person name="Fukuzumi Y."/>
            <person name="Fujimori Y."/>
            <person name="Komiyama M."/>
            <person name="Tashiro H."/>
            <person name="Tanigami A."/>
            <person name="Fujiwara T."/>
            <person name="Ono T."/>
            <person name="Yamada K."/>
            <person name="Fujii Y."/>
            <person name="Ozaki K."/>
            <person name="Hirao M."/>
            <person name="Ohmori Y."/>
            <person name="Kawabata A."/>
            <person name="Hikiji T."/>
            <person name="Kobatake N."/>
            <person name="Inagaki H."/>
            <person name="Ikema Y."/>
            <person name="Okamoto S."/>
            <person name="Okitani R."/>
            <person name="Kawakami T."/>
            <person name="Noguchi S."/>
            <person name="Itoh T."/>
            <person name="Shigeta K."/>
            <person name="Senba T."/>
            <person name="Matsumura K."/>
            <person name="Nakajima Y."/>
            <person name="Mizuno T."/>
            <person name="Morinaga M."/>
            <person name="Sasaki M."/>
            <person name="Togashi T."/>
            <person name="Oyama M."/>
            <person name="Hata H."/>
            <person name="Watanabe M."/>
            <person name="Komatsu T."/>
            <person name="Mizushima-Sugano J."/>
            <person name="Satoh T."/>
            <person name="Shirai Y."/>
            <person name="Takahashi Y."/>
            <person name="Nakagawa K."/>
            <person name="Okumura K."/>
            <person name="Nagase T."/>
            <person name="Nomura N."/>
            <person name="Kikuchi H."/>
            <person name="Masuho Y."/>
            <person name="Yamashita R."/>
            <person name="Nakai K."/>
            <person name="Yada T."/>
            <person name="Nakamura Y."/>
            <person name="Ohara O."/>
            <person name="Isogai T."/>
            <person name="Sugano S."/>
        </authorList>
    </citation>
    <scope>NUCLEOTIDE SEQUENCE [LARGE SCALE MRNA] (ISOFORM TRKA-II)</scope>
    <scope>NUCLEOTIDE SEQUENCE [LARGE SCALE MRNA] OF 1-175 (ISOFORM 3)</scope>
    <source>
        <tissue>Uterus</tissue>
    </source>
</reference>
<reference key="5">
    <citation type="journal article" date="2006" name="Nature">
        <title>The DNA sequence and biological annotation of human chromosome 1.</title>
        <authorList>
            <person name="Gregory S.G."/>
            <person name="Barlow K.F."/>
            <person name="McLay K.E."/>
            <person name="Kaul R."/>
            <person name="Swarbreck D."/>
            <person name="Dunham A."/>
            <person name="Scott C.E."/>
            <person name="Howe K.L."/>
            <person name="Woodfine K."/>
            <person name="Spencer C.C.A."/>
            <person name="Jones M.C."/>
            <person name="Gillson C."/>
            <person name="Searle S."/>
            <person name="Zhou Y."/>
            <person name="Kokocinski F."/>
            <person name="McDonald L."/>
            <person name="Evans R."/>
            <person name="Phillips K."/>
            <person name="Atkinson A."/>
            <person name="Cooper R."/>
            <person name="Jones C."/>
            <person name="Hall R.E."/>
            <person name="Andrews T.D."/>
            <person name="Lloyd C."/>
            <person name="Ainscough R."/>
            <person name="Almeida J.P."/>
            <person name="Ambrose K.D."/>
            <person name="Anderson F."/>
            <person name="Andrew R.W."/>
            <person name="Ashwell R.I.S."/>
            <person name="Aubin K."/>
            <person name="Babbage A.K."/>
            <person name="Bagguley C.L."/>
            <person name="Bailey J."/>
            <person name="Beasley H."/>
            <person name="Bethel G."/>
            <person name="Bird C.P."/>
            <person name="Bray-Allen S."/>
            <person name="Brown J.Y."/>
            <person name="Brown A.J."/>
            <person name="Buckley D."/>
            <person name="Burton J."/>
            <person name="Bye J."/>
            <person name="Carder C."/>
            <person name="Chapman J.C."/>
            <person name="Clark S.Y."/>
            <person name="Clarke G."/>
            <person name="Clee C."/>
            <person name="Cobley V."/>
            <person name="Collier R.E."/>
            <person name="Corby N."/>
            <person name="Coville G.J."/>
            <person name="Davies J."/>
            <person name="Deadman R."/>
            <person name="Dunn M."/>
            <person name="Earthrowl M."/>
            <person name="Ellington A.G."/>
            <person name="Errington H."/>
            <person name="Frankish A."/>
            <person name="Frankland J."/>
            <person name="French L."/>
            <person name="Garner P."/>
            <person name="Garnett J."/>
            <person name="Gay L."/>
            <person name="Ghori M.R.J."/>
            <person name="Gibson R."/>
            <person name="Gilby L.M."/>
            <person name="Gillett W."/>
            <person name="Glithero R.J."/>
            <person name="Grafham D.V."/>
            <person name="Griffiths C."/>
            <person name="Griffiths-Jones S."/>
            <person name="Grocock R."/>
            <person name="Hammond S."/>
            <person name="Harrison E.S.I."/>
            <person name="Hart E."/>
            <person name="Haugen E."/>
            <person name="Heath P.D."/>
            <person name="Holmes S."/>
            <person name="Holt K."/>
            <person name="Howden P.J."/>
            <person name="Hunt A.R."/>
            <person name="Hunt S.E."/>
            <person name="Hunter G."/>
            <person name="Isherwood J."/>
            <person name="James R."/>
            <person name="Johnson C."/>
            <person name="Johnson D."/>
            <person name="Joy A."/>
            <person name="Kay M."/>
            <person name="Kershaw J.K."/>
            <person name="Kibukawa M."/>
            <person name="Kimberley A.M."/>
            <person name="King A."/>
            <person name="Knights A.J."/>
            <person name="Lad H."/>
            <person name="Laird G."/>
            <person name="Lawlor S."/>
            <person name="Leongamornlert D.A."/>
            <person name="Lloyd D.M."/>
            <person name="Loveland J."/>
            <person name="Lovell J."/>
            <person name="Lush M.J."/>
            <person name="Lyne R."/>
            <person name="Martin S."/>
            <person name="Mashreghi-Mohammadi M."/>
            <person name="Matthews L."/>
            <person name="Matthews N.S.W."/>
            <person name="McLaren S."/>
            <person name="Milne S."/>
            <person name="Mistry S."/>
            <person name="Moore M.J.F."/>
            <person name="Nickerson T."/>
            <person name="O'Dell C.N."/>
            <person name="Oliver K."/>
            <person name="Palmeiri A."/>
            <person name="Palmer S.A."/>
            <person name="Parker A."/>
            <person name="Patel D."/>
            <person name="Pearce A.V."/>
            <person name="Peck A.I."/>
            <person name="Pelan S."/>
            <person name="Phelps K."/>
            <person name="Phillimore B.J."/>
            <person name="Plumb R."/>
            <person name="Rajan J."/>
            <person name="Raymond C."/>
            <person name="Rouse G."/>
            <person name="Saenphimmachak C."/>
            <person name="Sehra H.K."/>
            <person name="Sheridan E."/>
            <person name="Shownkeen R."/>
            <person name="Sims S."/>
            <person name="Skuce C.D."/>
            <person name="Smith M."/>
            <person name="Steward C."/>
            <person name="Subramanian S."/>
            <person name="Sycamore N."/>
            <person name="Tracey A."/>
            <person name="Tromans A."/>
            <person name="Van Helmond Z."/>
            <person name="Wall M."/>
            <person name="Wallis J.M."/>
            <person name="White S."/>
            <person name="Whitehead S.L."/>
            <person name="Wilkinson J.E."/>
            <person name="Willey D.L."/>
            <person name="Williams H."/>
            <person name="Wilming L."/>
            <person name="Wray P.W."/>
            <person name="Wu Z."/>
            <person name="Coulson A."/>
            <person name="Vaudin M."/>
            <person name="Sulston J.E."/>
            <person name="Durbin R.M."/>
            <person name="Hubbard T."/>
            <person name="Wooster R."/>
            <person name="Dunham I."/>
            <person name="Carter N.P."/>
            <person name="McVean G."/>
            <person name="Ross M.T."/>
            <person name="Harrow J."/>
            <person name="Olson M.V."/>
            <person name="Beck S."/>
            <person name="Rogers J."/>
            <person name="Bentley D.R."/>
        </authorList>
    </citation>
    <scope>NUCLEOTIDE SEQUENCE [LARGE SCALE GENOMIC DNA]</scope>
</reference>
<reference key="6">
    <citation type="journal article" date="2004" name="Genome Res.">
        <title>The status, quality, and expansion of the NIH full-length cDNA project: the Mammalian Gene Collection (MGC).</title>
        <authorList>
            <consortium name="The MGC Project Team"/>
        </authorList>
    </citation>
    <scope>NUCLEOTIDE SEQUENCE [LARGE SCALE MRNA] (ISOFORMS TRKA-I AND TRKA-II)</scope>
    <source>
        <tissue>Brain</tissue>
    </source>
</reference>
<reference key="7">
    <citation type="journal article" date="2005" name="Oncogene">
        <title>Methylation adjacent to negatively regulating AP-1 site reactivates TrkA gene expression during cancer progression.</title>
        <authorList>
            <person name="Fujimoto M."/>
            <person name="Kitazawa R."/>
            <person name="Maeda S."/>
            <person name="Kitazawa S."/>
        </authorList>
    </citation>
    <scope>NUCLEOTIDE SEQUENCE [GENOMIC DNA] OF 1-71</scope>
</reference>
<reference key="8">
    <citation type="journal article" date="1986" name="Nature">
        <title>A human oncogene formed by the fusion of truncated tropomyosin and protein tyrosine kinase sequences.</title>
        <authorList>
            <person name="Martin-Zanca D."/>
            <person name="Hughes S.H."/>
            <person name="Barbacid M."/>
        </authorList>
    </citation>
    <scope>NUCLEOTIDE SEQUENCE [MRNA] OF 399-796</scope>
    <scope>CHROMOSOMAL TRANSLOCATION WITH TPM3</scope>
</reference>
<reference key="9">
    <citation type="journal article" date="1988" name="EMBO J.">
        <title>Activation of the receptor kinase domain of the trk oncogene by recombination with two different cellular sequences.</title>
        <authorList>
            <person name="Kozma S.C."/>
            <person name="Redmond S.M.S."/>
            <person name="Saurer S.M."/>
            <person name="Groner B."/>
            <person name="Hynes N.E."/>
        </authorList>
    </citation>
    <scope>NUCLEOTIDE SEQUENCE [MRNA] OF 399-796</scope>
</reference>
<reference key="10">
    <citation type="journal article" date="1995" name="Mol. Cell. Biol.">
        <title>The DNA rearrangement that generates the TRK-T3 oncogene involves a novel gene on chromosome 3 whose product has a potential coiled-coil domain.</title>
        <authorList>
            <person name="Greco A."/>
            <person name="Mariani C."/>
            <person name="Miranda C."/>
            <person name="Lupas A."/>
            <person name="Pagliardini S."/>
            <person name="Pomati M."/>
            <person name="Pierotti M.A."/>
        </authorList>
    </citation>
    <scope>NUCLEOTIDE SEQUENCE [MRNA] OF 399-796</scope>
    <scope>CHROMOSOMAL TRANSLOCATION WITH TFG</scope>
</reference>
<reference key="11">
    <citation type="journal article" date="1992" name="Oncogene">
        <title>TRK-T1 is a novel oncogene formed by the fusion of TPR and TRK genes in human papillary thyroid carcinomas.</title>
        <authorList>
            <person name="Greco A."/>
            <person name="Pierotti M.A."/>
            <person name="Bongarzone I."/>
            <person name="Pagliardini S."/>
            <person name="Lanzi C."/>
            <person name="Della Porta G."/>
        </authorList>
    </citation>
    <scope>NUCLEOTIDE SEQUENCE [MRNA] OF 486-796</scope>
    <scope>CHROMOSOMAL REARRANGEMENT WITH TPR</scope>
</reference>
<reference key="12">
    <citation type="journal article" date="1991" name="Nature">
        <title>High-affinity NGF binding requires coexpression of the trk proto-oncogene and the low-affinity NGF receptor.</title>
        <authorList>
            <person name="Hempstead B.L."/>
            <person name="Martin-Zanca D."/>
            <person name="Kaplan D.R."/>
            <person name="Parada L.F."/>
            <person name="Chao M.V."/>
        </authorList>
    </citation>
    <scope>FUNCTION AS RECEPTOR FOR NGF</scope>
</reference>
<reference key="13">
    <citation type="journal article" date="1991" name="Cell">
        <title>The trk proto-oncogene encodes a receptor for nerve growth factor.</title>
        <authorList>
            <person name="Klein R."/>
            <person name="Jing S."/>
            <person name="Nanduri V."/>
            <person name="O'Rourke E."/>
            <person name="Barbacid M."/>
        </authorList>
    </citation>
    <scope>FUNCTION IN NGF SIGNALING</scope>
    <scope>IDENTIFICATION AS THE HIGH AFFINITY NGF RECEPTOR</scope>
</reference>
<reference key="14">
    <citation type="journal article" date="1992" name="Neuron">
        <title>Nerve growth factor mediates signal transduction through trk homodimer receptors.</title>
        <authorList>
            <person name="Jing S."/>
            <person name="Tapley P."/>
            <person name="Barbacid M."/>
        </authorList>
    </citation>
    <scope>FUNCTION</scope>
    <scope>SUBUNIT</scope>
    <scope>CATALYTIC ACTIVITY</scope>
    <scope>PHOSPHORYLATION</scope>
    <scope>SUBCELLULAR LOCATION</scope>
    <scope>MUTAGENESIS OF LYS-544</scope>
</reference>
<reference key="15">
    <citation type="journal article" date="1993" name="J. Biol. Chem.">
        <title>Tissue-specific alternative splicing generates two isoforms of the trkA receptor.</title>
        <authorList>
            <person name="Barker P.A."/>
            <person name="Lomen-Hoerth C."/>
            <person name="Gensch E.M."/>
            <person name="Meakin S.O."/>
            <person name="Glass D.J."/>
            <person name="Shooter E.M."/>
        </authorList>
    </citation>
    <scope>ALTERNATIVE SPLICING (ISOFORMS TRKA-I AND TRKA-II)</scope>
    <scope>FUNCTION IN CELL SURVIVAL</scope>
    <scope>NGF-BINDING</scope>
    <scope>PHOSPHORYLATION</scope>
    <scope>TISSUE SPECIFICITY</scope>
</reference>
<reference key="16">
    <citation type="journal article" date="1994" name="J. Biol. Chem.">
        <title>A Trk nerve growth factor (NGF) receptor point mutation affecting interaction with phospholipase C-gamma 1 abolishes NGF-promoted peripherin induction but not neurite outgrowth.</title>
        <authorList>
            <person name="Loeb D.M."/>
            <person name="Stephens R.M."/>
            <person name="Copeland T.D."/>
            <person name="Kaplan D.R."/>
            <person name="Greene L.A."/>
        </authorList>
    </citation>
    <scope>PHOSPHORYLATION AT TYR-791</scope>
    <scope>INTERACTION WITH PLCG1</scope>
    <scope>MUTAGENESIS OF TYR-791</scope>
</reference>
<reference key="17">
    <citation type="journal article" date="1994" name="Neuron">
        <title>Trk receptors use redundant signal transduction pathways involving SHC and PLC-gamma 1 to mediate NGF responses.</title>
        <authorList>
            <person name="Stephens R.M."/>
            <person name="Loeb D.M."/>
            <person name="Copeland T.D."/>
            <person name="Pawson T."/>
            <person name="Greene L.A."/>
            <person name="Kaplan D.R."/>
        </authorList>
    </citation>
    <scope>FUNCTION IN NEURONAL DIFFERENTIATION</scope>
    <scope>FUNCTION IN PHOSPHORYLATION OF SHC1 AND PLCG1</scope>
    <scope>INTERACTION WITH SHC1</scope>
    <scope>MUTAGENESIS OF TYR-496; LYS-544 AND TYR-791</scope>
    <scope>PHOSPHORYLATION AT TYR-496; TYR-676; TYR-680; TYR-681 AND TYR-791</scope>
</reference>
<reference key="18">
    <citation type="journal article" date="2001" name="J. Biol. Chem.">
        <title>The atypical protein kinase C-interacting protein p62 is a scaffold for NF-kappaB activation by nerve growth factor.</title>
        <authorList>
            <person name="Wooten M.W."/>
            <person name="Seibenhener M.L."/>
            <person name="Mamidipudi V."/>
            <person name="Diaz-Meco M.T."/>
            <person name="Barker P.A."/>
            <person name="Moscat J."/>
        </authorList>
    </citation>
    <scope>FUNCTION IN NF-KAPPA-B ACTIVATION</scope>
    <scope>INTERACTION WITH SQSTM1</scope>
</reference>
<reference key="19">
    <citation type="journal article" date="2004" name="Cancer Cell">
        <title>TrkA alternative splicing: a regulated tumor-promoting switch in human neuroblastoma.</title>
        <authorList>
            <person name="Tacconelli A."/>
            <person name="Farina A.R."/>
            <person name="Cappabianca L."/>
            <person name="Desantis G."/>
            <person name="Tessitore A."/>
            <person name="Vetuschi A."/>
            <person name="Sferra R."/>
            <person name="Rucci N."/>
            <person name="Argenti B."/>
            <person name="Screpanti I."/>
            <person name="Gulino A."/>
            <person name="Mackay A.R."/>
        </authorList>
    </citation>
    <scope>FUNCTION IN NEURONAL CELL PROLIFERATION AND DIFFERENTIATION</scope>
    <scope>FUNCTION IN SIGNALING CASCADE ACTIVATION</scope>
    <scope>NGF-BINDING</scope>
    <scope>SUBCELLULAR LOCATION</scope>
    <scope>ALTERNATIVE SPLICING (ISOFORM TRKA-III)</scope>
    <scope>CHARACTERIZATION OF ISOFORM TRKA-III</scope>
    <scope>PHOSPHORYLATION AT TYR-496; TYR-680; TYR-681 AND TYR-791</scope>
    <scope>INTERACTION WITH FRS2; GRB2; PIK3R1; PLCG1; SHC1</scope>
    <scope>GLYCOSYLATION</scope>
    <scope>TISSUE SPECIFICITY</scope>
    <scope>INDUCTION BY HYPOXIA</scope>
</reference>
<reference key="20">
    <citation type="journal article" date="2011" name="Nat. Neurosci.">
        <title>Sortilin associates with Trk receptors to enhance anterograde transport and neurotrophin signaling.</title>
        <authorList>
            <person name="Vaegter C.B."/>
            <person name="Jansen P."/>
            <person name="Fjorback A.W."/>
            <person name="Glerup S."/>
            <person name="Skeldal S."/>
            <person name="Kjolby M."/>
            <person name="Richner M."/>
            <person name="Erdmann B."/>
            <person name="Nyengaard J.R."/>
            <person name="Tessarollo L."/>
            <person name="Lewin G.R."/>
            <person name="Willnow T.E."/>
            <person name="Chao M.V."/>
            <person name="Nykjaer A."/>
        </authorList>
    </citation>
    <scope>INTERACTION WITH SORT1</scope>
    <scope>ACTIVITY REGULATION</scope>
</reference>
<reference key="21">
    <citation type="journal article" date="2012" name="FASEB J.">
        <title>Structural and functional insights into lipid-bound nerve growth factors.</title>
        <authorList>
            <person name="Tong Q."/>
            <person name="Wang F."/>
            <person name="Zhou H.Z."/>
            <person name="Sun H.L."/>
            <person name="Song H."/>
            <person name="Shu Y.Y."/>
            <person name="Gong Y."/>
            <person name="Zhang W.T."/>
            <person name="Cai T.X."/>
            <person name="Yang F.Q."/>
            <person name="Tang J."/>
            <person name="Jiang T."/>
        </authorList>
    </citation>
    <scope>FUNCTION</scope>
    <scope>INTERACTION WITH NGF</scope>
</reference>
<reference key="22">
    <citation type="journal article" date="2015" name="Mol. Biol. Cell">
        <title>GGA3 mediates TrkA endocytic recycling to promote sustained Akt phosphorylation and cell survival.</title>
        <authorList>
            <person name="Li X."/>
            <person name="Lavigne P."/>
            <person name="Lavoie C."/>
        </authorList>
    </citation>
    <scope>INTERACTION WITH GGA3</scope>
    <scope>MUTAGENESIS OF 540-LEU-VAL-541; LYS-544 AND 610-LEU-LEU-611</scope>
</reference>
<reference key="23">
    <citation type="journal article" date="2016" name="J. Biol. Chem.">
        <title>Ubiquitin-specific Protease 36 (USP36) Controls Neuronal Precursor Cell-expressed Developmentally Down-regulated 4-2 (Nedd4-2) Actions over the Neurotrophin Receptor TrkA and Potassium Voltage-gated Channels 7.2/3 (Kv7.2/3).</title>
        <authorList>
            <person name="Anta B."/>
            <person name="Martin-Rodriguez C."/>
            <person name="Gomis-Perez C."/>
            <person name="Calvo L."/>
            <person name="Lopez-Benito S."/>
            <person name="Calderon-Garcia A.A."/>
            <person name="Vicente-Garcia C."/>
            <person name="Villarroel A."/>
            <person name="Arevalo J.C."/>
        </authorList>
    </citation>
    <scope>FUNCTION</scope>
    <scope>UBIQUITINATION BY NEDD4L</scope>
    <scope>INTERACTION WITH USP36</scope>
</reference>
<reference key="24">
    <citation type="journal article" date="2017" name="J. Peripher. Nerv. Syst.">
        <title>Novel NTRK1 mutations associated with congenital insensitivity to pain with anhidrosis verified by functional studies.</title>
        <authorList>
            <person name="Nam T.S."/>
            <person name="Li W."/>
            <person name="Yoon S."/>
            <person name="Eom G.H."/>
            <person name="Kim M.K."/>
            <person name="Jung S.T."/>
            <person name="Choi S.Y."/>
        </authorList>
    </citation>
    <scope>PHOSPHORYLATION</scope>
    <scope>VARIANTS CIPA 235-SER--GLY-796 DEL; ASN-596 AND TYR-674</scope>
    <scope>CHARACTERIZATION OF VARIANTS CIPA 235-SER--GLY-796 DEL AND ASN-596</scope>
</reference>
<reference key="25">
    <citation type="journal article" date="1995" name="Nature">
        <title>Structure and ligand recognition of the phosphotyrosine binding domain of Shc.</title>
        <authorList>
            <person name="Zhou M.-M."/>
            <person name="Ravichandran K.S."/>
            <person name="Olejniczak E.F."/>
            <person name="Petros A.M."/>
            <person name="Meadows R.P."/>
            <person name="Sattler M."/>
            <person name="Harlan J.E."/>
            <person name="Wade W.S."/>
            <person name="Burakoff S.J."/>
            <person name="Fesik S.W."/>
        </authorList>
    </citation>
    <scope>STRUCTURE BY NMR OF 489-500</scope>
</reference>
<reference key="26">
    <citation type="journal article" date="1999" name="J. Mol. Biol.">
        <title>Crystal structures of the neurotrophin-binding domain of TrkA, TrkB and TrkC.</title>
        <authorList>
            <person name="Ultsch M.H."/>
            <person name="Wiesmann C."/>
            <person name="Simmons L.C."/>
            <person name="Henrich J."/>
            <person name="Yang M."/>
            <person name="Reilly D."/>
            <person name="Bass S.H."/>
            <person name="de Vos A.M."/>
        </authorList>
    </citation>
    <scope>X-RAY CRYSTALLOGRAPHY (2.50 ANGSTROMS) OF 278-386</scope>
    <scope>DISULFIDE BONDS</scope>
</reference>
<reference key="27">
    <citation type="journal article" date="1999" name="Nature">
        <title>Crystal structure of nerve growth factor in complex with the ligand-binding domain of the TrkA receptor.</title>
        <authorList>
            <person name="Wiesmann C."/>
            <person name="Ultsch M.H."/>
            <person name="Bass S.H."/>
            <person name="de Vos A.M."/>
        </authorList>
    </citation>
    <scope>X-RAY CRYSTALLOGRAPHY (2.20 ANGSTROMS) OF 282-382 IN COMPLEX WITH NGF</scope>
    <scope>SUBUNIT</scope>
    <scope>DISULFIDE BONDS</scope>
</reference>
<reference key="28">
    <citation type="journal article" date="2007" name="Neuron">
        <title>Structural and mechanistic insights into nerve growth factor interactions with the TrkA and p75 receptors.</title>
        <authorList>
            <person name="Wehrman T."/>
            <person name="He X."/>
            <person name="Raab B."/>
            <person name="Dukipatti A."/>
            <person name="Blau H."/>
            <person name="Garcia K.C."/>
        </authorList>
    </citation>
    <scope>X-RAY CRYSTALLOGRAPHY (3.4 ANGSTROMS) OF 36-382 IN COMPLEX WITH NGF</scope>
    <scope>HOMODIMERIZATION</scope>
    <scope>SUBUNIT</scope>
    <scope>SUBCELLULAR LOCATION</scope>
    <scope>DISULFIDE BONDS</scope>
    <scope>GLYCOSYLATION AT ASN-95; ASN-121; ASN-188; ASN-262; ASN-281 AND ASN-358</scope>
</reference>
<reference key="29">
    <citation type="journal article" date="1996" name="Nat. Genet.">
        <title>Mutations in the TRKA/NGF receptor gene in patients with congenital insensitivity to pain with anhidrosis.</title>
        <authorList>
            <person name="Indo Y."/>
            <person name="Tsuruta M."/>
            <person name="Hayashida Y."/>
            <person name="Karim M.A."/>
            <person name="Ohta K."/>
            <person name="Kawano T."/>
            <person name="Mitsubuchi H."/>
            <person name="Tonoki H."/>
            <person name="Awaya Y."/>
            <person name="Matsuda I."/>
        </authorList>
    </citation>
    <scope>VARIANT CIPA ARG-577</scope>
</reference>
<reference key="30">
    <citation type="journal article" date="1999" name="Am. J. Hum. Genet.">
        <title>A novel NTRK1 mutation associated with congenital insensitivity to pain with anhidrosis.</title>
        <authorList>
            <person name="Greco A."/>
            <person name="Villa R."/>
            <person name="Tubino B."/>
            <person name="Romano L."/>
            <person name="Penso D."/>
            <person name="Pierotti M.A."/>
        </authorList>
    </citation>
    <scope>VARIANT CIPA PRO-780</scope>
</reference>
<reference key="31">
    <citation type="journal article" date="1999" name="Am. J. Hum. Genet.">
        <title>Congenital insensitivity to pain with anhidrosis: novel mutations in the TRKA (NTRK1) gene encoding a high-affinity receptor for nerve growth factor.</title>
        <authorList>
            <person name="Mardy S."/>
            <person name="Miura Y."/>
            <person name="Endo F."/>
            <person name="Matsuda I."/>
            <person name="Sztriha L."/>
            <person name="Frossard P."/>
            <person name="Moosa A."/>
            <person name="Ismail E.A.R."/>
            <person name="Macaya A."/>
            <person name="Andria G."/>
            <person name="Toscano E."/>
            <person name="Gibson W."/>
            <person name="Graham G.E."/>
            <person name="Indo Y."/>
        </authorList>
    </citation>
    <scope>VARIANTS CIPA PRO-213; TRP-649 AND SER-714</scope>
    <scope>VARIANTS SER-85; TYR-604 AND VAL-613</scope>
</reference>
<reference key="32">
    <citation type="journal article" date="1999" name="J. Clin. Endocrinol. Metab.">
        <title>Mutation analysis reveals novel sequence variants in NTRK1 in sporadic human medullary thyroid carcinoma.</title>
        <authorList>
            <person name="Gimm O."/>
            <person name="Greco A."/>
            <person name="Hoang-Vu C."/>
            <person name="Dralle H."/>
            <person name="Pierotti M.A."/>
            <person name="Eng C."/>
        </authorList>
    </citation>
    <scope>VARIANTS TYR-604; VAL-613 AND GLN-780</scope>
</reference>
<reference key="33">
    <citation type="journal article" date="1999" name="J. Invest. Dermatol.">
        <title>A novel point mutation affecting the tyrosine kinase domain of the TRKA gene in a family with congenital insensitivity to pain with anhidrosis.</title>
        <authorList>
            <person name="Yotsumoto S."/>
            <person name="Setoyama M."/>
            <person name="Hozumi H."/>
            <person name="Mizoguchi S."/>
            <person name="Fukumaru S."/>
            <person name="Kobayashi K."/>
            <person name="Saheki T."/>
            <person name="Kanzaki T."/>
        </authorList>
    </citation>
    <scope>VARIANT CIPA VAL-587</scope>
</reference>
<reference key="34">
    <citation type="journal article" date="1999" name="Nat. Genet.">
        <title>Characterization of single-nucleotide polymorphisms in coding regions of human genes.</title>
        <authorList>
            <person name="Cargill M."/>
            <person name="Altshuler D."/>
            <person name="Ireland J."/>
            <person name="Sklar P."/>
            <person name="Ardlie K."/>
            <person name="Patil N."/>
            <person name="Shaw N."/>
            <person name="Lane C.R."/>
            <person name="Lim E.P."/>
            <person name="Kalyanaraman N."/>
            <person name="Nemesh J."/>
            <person name="Ziaugra L."/>
            <person name="Friedland L."/>
            <person name="Rolfe A."/>
            <person name="Warrington J."/>
            <person name="Lipshutz R."/>
            <person name="Daley G.Q."/>
            <person name="Lander E.S."/>
        </authorList>
    </citation>
    <scope>VARIANTS TYR-604 AND VAL-613</scope>
</reference>
<reference key="35">
    <citation type="journal article" date="1999" name="Nat. Genet.">
        <authorList>
            <person name="Cargill M."/>
            <person name="Altshuler D."/>
            <person name="Ireland J."/>
            <person name="Sklar P."/>
            <person name="Ardlie K."/>
            <person name="Patil N."/>
            <person name="Shaw N."/>
            <person name="Lane C.R."/>
            <person name="Lim E.P."/>
            <person name="Kalyanaraman N."/>
            <person name="Nemesh J."/>
            <person name="Ziaugra L."/>
            <person name="Friedland L."/>
            <person name="Rolfe A."/>
            <person name="Warrington J."/>
            <person name="Lipshutz R."/>
            <person name="Daley G.Q."/>
            <person name="Lander E.S."/>
        </authorList>
    </citation>
    <scope>ERRATUM OF PUBMED:10391209</scope>
</reference>
<reference key="36">
    <citation type="journal article" date="2000" name="Am. J. Med. Genet.">
        <title>Congenital insensitivity to pain with anhidrosis (CIPA) in Israeli-Bedouins: genetic heterogeneity, novel mutations in the TRKA/NGF receptor gene, clinical findings, and results of nerve conduction studies.</title>
        <authorList>
            <person name="Shatzky S."/>
            <person name="Moses S."/>
            <person name="Levy J."/>
            <person name="Pinsk V."/>
            <person name="Hershkovitz E."/>
            <person name="Herzog L."/>
            <person name="Shorer Z."/>
            <person name="Luder A."/>
            <person name="Parvari R."/>
        </authorList>
    </citation>
    <scope>VARIANT CIPA LEU-695</scope>
    <scope>VARIANT VAL-613</scope>
    <source>
        <tissue>Peripheral blood</tissue>
    </source>
</reference>
<reference key="37">
    <citation type="journal article" date="2000" name="Hum. Genet.">
        <title>Mutation and polymorphism analysis of the TRKA (NTRK1) gene encoding a high-affinity receptor for nerve growth factor in congenital insensitivity to pain with anhidrosis (CIPA) families.</title>
        <authorList>
            <person name="Miura Y."/>
            <person name="Mardy S."/>
            <person name="Awaya Y."/>
            <person name="Nihei K."/>
            <person name="Endo F."/>
            <person name="Matsuda I."/>
            <person name="Indo Y."/>
        </authorList>
    </citation>
    <scope>VARIANTS CIPA PRO-93; ARG-522; ARG-577; CYS-654 AND TYR-674</scope>
</reference>
<reference key="38">
    <citation type="journal article" date="2000" name="J. Cell. Physiol.">
        <title>The Gly571Arg mutation, associated with the autonomic and sensory disorder congenital insensitivity to pain with anhidrosis, causes the inactivation of the NTRK1/nerve growth factor receptor.</title>
        <authorList>
            <person name="Greco A."/>
            <person name="Villa R."/>
            <person name="Fusetti L."/>
            <person name="Orlandi R."/>
            <person name="Pierotti M.A."/>
        </authorList>
    </citation>
    <scope>VARIANT CIPA ARG-577</scope>
</reference>
<reference key="39">
    <citation type="journal article" date="2001" name="Ann. Neurol.">
        <title>A novel TRK A (NTRK1) mutation associated with hereditary sensory and autonomic neuropathy type V.</title>
        <authorList>
            <person name="Houlden H."/>
            <person name="King R.H."/>
            <person name="Hashemi-Nejad A."/>
            <person name="Wood N.W."/>
            <person name="Mathias C.J."/>
            <person name="Reilly M."/>
            <person name="Thomas P.K."/>
        </authorList>
    </citation>
    <scope>VARIANT CIPA CYS-359</scope>
    <scope>VARIANTS TYR-604 AND VAL-613</scope>
</reference>
<reference key="40">
    <citation type="journal article" date="2001" name="Hum. Mol. Genet.">
        <title>Congenital insensitivity to pain with anhidrosis (CIPA): effect of TRKA (NTRK1) missense mutations on autophosphorylation of the receptor tyrosine kinase for nerve growth factor.</title>
        <authorList>
            <person name="Mardy S."/>
            <person name="Miura Y."/>
            <person name="Endo F."/>
            <person name="Matsuda I."/>
            <person name="Indo Y."/>
        </authorList>
    </citation>
    <scope>CHARACTERIZATION OF VARIANTS CIPA PRO-93; PRO-213; ARG-522; ARG-577; TRP-649; CYS-654 AND SER-714</scope>
    <scope>CHARACTERIZATION OF VARIANTS SER-85; TYR-604; VAL-613 AND TYR-674</scope>
</reference>
<reference key="41">
    <citation type="journal article" date="2007" name="Nature">
        <title>Patterns of somatic mutation in human cancer genomes.</title>
        <authorList>
            <person name="Greenman C."/>
            <person name="Stephens P."/>
            <person name="Smith R."/>
            <person name="Dalgliesh G.L."/>
            <person name="Hunter C."/>
            <person name="Bignell G."/>
            <person name="Davies H."/>
            <person name="Teague J."/>
            <person name="Butler A."/>
            <person name="Stevens C."/>
            <person name="Edkins S."/>
            <person name="O'Meara S."/>
            <person name="Vastrik I."/>
            <person name="Schmidt E.E."/>
            <person name="Avis T."/>
            <person name="Barthorpe S."/>
            <person name="Bhamra G."/>
            <person name="Buck G."/>
            <person name="Choudhury B."/>
            <person name="Clements J."/>
            <person name="Cole J."/>
            <person name="Dicks E."/>
            <person name="Forbes S."/>
            <person name="Gray K."/>
            <person name="Halliday K."/>
            <person name="Harrison R."/>
            <person name="Hills K."/>
            <person name="Hinton J."/>
            <person name="Jenkinson A."/>
            <person name="Jones D."/>
            <person name="Menzies A."/>
            <person name="Mironenko T."/>
            <person name="Perry J."/>
            <person name="Raine K."/>
            <person name="Richardson D."/>
            <person name="Shepherd R."/>
            <person name="Small A."/>
            <person name="Tofts C."/>
            <person name="Varian J."/>
            <person name="Webb T."/>
            <person name="West S."/>
            <person name="Widaa S."/>
            <person name="Yates A."/>
            <person name="Cahill D.P."/>
            <person name="Louis D.N."/>
            <person name="Goldstraw P."/>
            <person name="Nicholson A.G."/>
            <person name="Brasseur F."/>
            <person name="Looijenga L."/>
            <person name="Weber B.L."/>
            <person name="Chiew Y.-E."/>
            <person name="DeFazio A."/>
            <person name="Greaves M.F."/>
            <person name="Green A.R."/>
            <person name="Campbell P."/>
            <person name="Birney E."/>
            <person name="Easton D.F."/>
            <person name="Chenevix-Trench G."/>
            <person name="Tan M.-H."/>
            <person name="Khoo S.K."/>
            <person name="Teh B.T."/>
            <person name="Yuen S.T."/>
            <person name="Leung S.Y."/>
            <person name="Wooster R."/>
            <person name="Futreal P.A."/>
            <person name="Stratton M.R."/>
        </authorList>
    </citation>
    <scope>VARIANTS [LARGE SCALE ANALYSIS] ARG-80; VAL-107; MET-237; GLY-238; GLY-260; GLN-444; CYS-452; THR-566; TYR-604; VAL-613; GLN-780 AND ILE-790</scope>
</reference>
<reference key="42">
    <citation type="journal article" date="2008" name="Neuromuscul. Disord.">
        <title>Novel missense, insertion and deletion mutations in the neurotrophic tyrosine kinase receptor type 1 gene (NTRK1) associated with congenital insensitivity to pain with anhidrosis.</title>
        <authorList>
            <person name="Huehne K."/>
            <person name="Zweier C."/>
            <person name="Raab K."/>
            <person name="Odent S."/>
            <person name="Bonnaure-Mallet M."/>
            <person name="Sixou J.L."/>
            <person name="Landrieu P."/>
            <person name="Goizet C."/>
            <person name="Sarlangue J."/>
            <person name="Baumann M."/>
            <person name="Eggermann T."/>
            <person name="Rauch A."/>
            <person name="Ruppert S."/>
            <person name="Stettner G.M."/>
            <person name="Rautenstrauss B."/>
        </authorList>
    </citation>
    <scope>VARIANTS CIPA SER-572 AND ARG-717</scope>
</reference>
<reference key="43">
    <citation type="journal article" date="2012" name="J. Neurol.">
        <title>Frequency of mutations in the genes associated with hereditary sensory and autonomic neuropathy in a UK cohort.</title>
        <authorList>
            <person name="Davidson G.L."/>
            <person name="Murphy S.M."/>
            <person name="Polke J.M."/>
            <person name="Laura M."/>
            <person name="Salih M.A."/>
            <person name="Muntoni F."/>
            <person name="Blake J."/>
            <person name="Brandner S."/>
            <person name="Davies N."/>
            <person name="Horvath R."/>
            <person name="Price S."/>
            <person name="Donaghy M."/>
            <person name="Roberts M."/>
            <person name="Foulds N."/>
            <person name="Ramdharry G."/>
            <person name="Soler D."/>
            <person name="Lunn M.P."/>
            <person name="Manji H."/>
            <person name="Davis M.B."/>
            <person name="Houlden H."/>
            <person name="Reilly M.M."/>
        </authorList>
    </citation>
    <scope>VARIANTS CIPA LYS-492 AND CYS-654</scope>
    <scope>VARIANT TRP-6</scope>
</reference>
<reference key="44">
    <citation type="journal article" date="2017" name="Am. J. Med. Genet. A">
        <title>Exome sequencing identifies novel NTRK1 mutations in patients with HSAN-IV phenotype.</title>
        <authorList>
            <person name="Altassan R."/>
            <person name="Saud H.A."/>
            <person name="Masoodi T.A."/>
            <person name="Dosssari H.A."/>
            <person name="Khalifa O."/>
            <person name="Al-Zaidan H."/>
            <person name="Sakati N."/>
            <person name="Rhabeeni Z."/>
            <person name="Al-Hassnan Z."/>
            <person name="Binamer Y."/>
            <person name="Alhashemi N."/>
            <person name="Wade W."/>
            <person name="Al-Zayed Z."/>
            <person name="Al-Sayed M."/>
            <person name="Al-Muhaizea M.A."/>
            <person name="Meyer B."/>
            <person name="Al-Owain M."/>
            <person name="Wakil S.M."/>
        </authorList>
    </citation>
    <scope>VARIANTS CIPA ASP-110; 146-SER--GLY-796 DEL; 176-GLN--GLY-796 DEL; 476-LEU--GLY-796 DEL; GLN-649 AND PRO-700</scope>
</reference>
<reference key="45">
    <citation type="journal article" date="2017" name="Hum. Mutat.">
        <title>A comprehensive functional analysis of NTRK1 missense mutations causing hereditary sensory and autonomic neuropathy type IV (HSAN IV).</title>
        <authorList>
            <person name="Shaikh S.S."/>
            <person name="Chen Y.C."/>
            <person name="Halsall S.A."/>
            <person name="Nahorski M.S."/>
            <person name="Omoto K."/>
            <person name="Young G.T."/>
            <person name="Phelan A."/>
            <person name="Woods C.G."/>
        </authorList>
    </citation>
    <scope>VARIANTS CIPA GLU-517; GLU-522; PRO-657; THR-699; SER-752; SER-763 AND CYS-771</scope>
    <scope>CHARACTERIZATION OF VARIANTS CIPA GLU-517; GLU-522; PRO-657; THR-699; SER-752; SER-763 AND CYS-771</scope>
    <scope>GLYCOSYLATION</scope>
    <scope>SUBCELLULAR LOCATION</scope>
    <scope>AUTOPHOSPHORYLATION AFTER NGF STIMULATION</scope>
    <scope>FUNCTION</scope>
</reference>
<dbReference type="EC" id="2.7.10.1" evidence="20 37"/>
<dbReference type="EMBL" id="M23102">
    <property type="protein sequence ID" value="AAA36770.1"/>
    <property type="molecule type" value="mRNA"/>
</dbReference>
<dbReference type="EMBL" id="AB019488">
    <property type="protein sequence ID" value="BAA34355.1"/>
    <property type="molecule type" value="Genomic_DNA"/>
</dbReference>
<dbReference type="EMBL" id="AK312704">
    <property type="protein sequence ID" value="BAG35582.1"/>
    <property type="molecule type" value="mRNA"/>
</dbReference>
<dbReference type="EMBL" id="DB265639">
    <property type="status" value="NOT_ANNOTATED_CDS"/>
    <property type="molecule type" value="mRNA"/>
</dbReference>
<dbReference type="EMBL" id="AL158169">
    <property type="status" value="NOT_ANNOTATED_CDS"/>
    <property type="molecule type" value="Genomic_DNA"/>
</dbReference>
<dbReference type="EMBL" id="BC062580">
    <property type="protein sequence ID" value="AAH62580.1"/>
    <property type="molecule type" value="mRNA"/>
</dbReference>
<dbReference type="EMBL" id="BC136554">
    <property type="protein sequence ID" value="AAI36555.1"/>
    <property type="molecule type" value="mRNA"/>
</dbReference>
<dbReference type="EMBL" id="BC144239">
    <property type="protein sequence ID" value="AAI44240.1"/>
    <property type="molecule type" value="mRNA"/>
</dbReference>
<dbReference type="EMBL" id="AY321513">
    <property type="protein sequence ID" value="AAP88292.1"/>
    <property type="molecule type" value="Genomic_DNA"/>
</dbReference>
<dbReference type="EMBL" id="X03541">
    <property type="protein sequence ID" value="CAA27243.1"/>
    <property type="status" value="ALT_SEQ"/>
    <property type="molecule type" value="mRNA"/>
</dbReference>
<dbReference type="EMBL" id="X06704">
    <property type="protein sequence ID" value="CAA29888.1"/>
    <property type="status" value="ALT_SEQ"/>
    <property type="molecule type" value="mRNA"/>
</dbReference>
<dbReference type="EMBL" id="X85960">
    <property type="protein sequence ID" value="CAA59936.1"/>
    <property type="status" value="ALT_SEQ"/>
    <property type="molecule type" value="mRNA"/>
</dbReference>
<dbReference type="EMBL" id="X62947">
    <property type="protein sequence ID" value="CAA44719.1"/>
    <property type="status" value="ALT_SEQ"/>
    <property type="molecule type" value="mRNA"/>
</dbReference>
<dbReference type="CCDS" id="CCDS1161.1">
    <molecule id="P04629-1"/>
</dbReference>
<dbReference type="CCDS" id="CCDS30891.1">
    <molecule id="P04629-2"/>
</dbReference>
<dbReference type="PIR" id="A30124">
    <property type="entry name" value="TVHUTT"/>
</dbReference>
<dbReference type="PIR" id="S23741">
    <property type="entry name" value="S23741"/>
</dbReference>
<dbReference type="RefSeq" id="NP_001007793.1">
    <molecule id="P04629-3"/>
    <property type="nucleotide sequence ID" value="NM_001007792.1"/>
</dbReference>
<dbReference type="RefSeq" id="NP_001012331.1">
    <molecule id="P04629-2"/>
    <property type="nucleotide sequence ID" value="NM_001012331.2"/>
</dbReference>
<dbReference type="RefSeq" id="NP_002520.2">
    <molecule id="P04629-1"/>
    <property type="nucleotide sequence ID" value="NM_002529.3"/>
</dbReference>
<dbReference type="PDB" id="1HE7">
    <property type="method" value="X-ray"/>
    <property type="resolution" value="2.00 A"/>
    <property type="chains" value="A=285-413"/>
</dbReference>
<dbReference type="PDB" id="1SHC">
    <property type="method" value="NMR"/>
    <property type="chains" value="B=489-500"/>
</dbReference>
<dbReference type="PDB" id="1WWA">
    <property type="method" value="X-ray"/>
    <property type="resolution" value="2.50 A"/>
    <property type="chains" value="X/Y=278-386"/>
</dbReference>
<dbReference type="PDB" id="1WWW">
    <property type="method" value="X-ray"/>
    <property type="resolution" value="2.20 A"/>
    <property type="chains" value="X/Y=282-382"/>
</dbReference>
<dbReference type="PDB" id="2IFG">
    <property type="method" value="X-ray"/>
    <property type="resolution" value="3.40 A"/>
    <property type="chains" value="A/B=36-382"/>
</dbReference>
<dbReference type="PDB" id="2N90">
    <property type="method" value="NMR"/>
    <property type="chains" value="A/B=410-447"/>
</dbReference>
<dbReference type="PDB" id="4AOJ">
    <property type="method" value="X-ray"/>
    <property type="resolution" value="2.75 A"/>
    <property type="chains" value="A/B/C=473-796"/>
</dbReference>
<dbReference type="PDB" id="4CRP">
    <property type="method" value="NMR"/>
    <property type="chains" value="A=282-383"/>
</dbReference>
<dbReference type="PDB" id="4F0I">
    <property type="method" value="X-ray"/>
    <property type="resolution" value="2.30 A"/>
    <property type="chains" value="A/B=498-796"/>
</dbReference>
<dbReference type="PDB" id="4GT5">
    <property type="method" value="X-ray"/>
    <property type="resolution" value="2.40 A"/>
    <property type="chains" value="A=498-796"/>
</dbReference>
<dbReference type="PDB" id="4PMM">
    <property type="method" value="X-ray"/>
    <property type="resolution" value="2.00 A"/>
    <property type="chains" value="A=501-787"/>
</dbReference>
<dbReference type="PDB" id="4PMP">
    <property type="method" value="X-ray"/>
    <property type="resolution" value="1.80 A"/>
    <property type="chains" value="A=501-787"/>
</dbReference>
<dbReference type="PDB" id="4PMS">
    <property type="method" value="X-ray"/>
    <property type="resolution" value="2.80 A"/>
    <property type="chains" value="A=501-787"/>
</dbReference>
<dbReference type="PDB" id="4PMT">
    <property type="method" value="X-ray"/>
    <property type="resolution" value="2.10 A"/>
    <property type="chains" value="A=501-787"/>
</dbReference>
<dbReference type="PDB" id="4YNE">
    <property type="method" value="X-ray"/>
    <property type="resolution" value="2.02 A"/>
    <property type="chains" value="A=502-796"/>
</dbReference>
<dbReference type="PDB" id="4YPS">
    <property type="method" value="X-ray"/>
    <property type="resolution" value="2.10 A"/>
    <property type="chains" value="A=502-796"/>
</dbReference>
<dbReference type="PDB" id="5H3Q">
    <property type="method" value="X-ray"/>
    <property type="resolution" value="2.10 A"/>
    <property type="chains" value="A=473-796"/>
</dbReference>
<dbReference type="PDB" id="5I8A">
    <property type="method" value="X-ray"/>
    <property type="resolution" value="2.33 A"/>
    <property type="chains" value="A=498-787"/>
</dbReference>
<dbReference type="PDB" id="5JFS">
    <property type="method" value="X-ray"/>
    <property type="resolution" value="2.07 A"/>
    <property type="chains" value="A=502-796"/>
</dbReference>
<dbReference type="PDB" id="5JFV">
    <property type="method" value="X-ray"/>
    <property type="resolution" value="1.59 A"/>
    <property type="chains" value="A=502-796"/>
</dbReference>
<dbReference type="PDB" id="5JFW">
    <property type="method" value="X-ray"/>
    <property type="resolution" value="1.52 A"/>
    <property type="chains" value="A=502-796"/>
</dbReference>
<dbReference type="PDB" id="5JFX">
    <property type="method" value="X-ray"/>
    <property type="resolution" value="1.63 A"/>
    <property type="chains" value="A=502-796"/>
</dbReference>
<dbReference type="PDB" id="5KMI">
    <property type="method" value="X-ray"/>
    <property type="resolution" value="1.87 A"/>
    <property type="chains" value="A=474-796"/>
</dbReference>
<dbReference type="PDB" id="5KMJ">
    <property type="method" value="X-ray"/>
    <property type="resolution" value="2.04 A"/>
    <property type="chains" value="A=474-796"/>
</dbReference>
<dbReference type="PDB" id="5KMK">
    <property type="method" value="X-ray"/>
    <property type="resolution" value="2.24 A"/>
    <property type="chains" value="A=474-796"/>
</dbReference>
<dbReference type="PDB" id="5KML">
    <property type="method" value="X-ray"/>
    <property type="resolution" value="2.01 A"/>
    <property type="chains" value="A=474-796"/>
</dbReference>
<dbReference type="PDB" id="5KMM">
    <property type="method" value="X-ray"/>
    <property type="resolution" value="2.12 A"/>
    <property type="chains" value="A=474-796"/>
</dbReference>
<dbReference type="PDB" id="5KMN">
    <property type="method" value="X-ray"/>
    <property type="resolution" value="2.14 A"/>
    <property type="chains" value="A=474-796"/>
</dbReference>
<dbReference type="PDB" id="5KMO">
    <property type="method" value="X-ray"/>
    <property type="resolution" value="2.67 A"/>
    <property type="chains" value="A=474-796"/>
</dbReference>
<dbReference type="PDB" id="5KVT">
    <property type="method" value="X-ray"/>
    <property type="resolution" value="2.45 A"/>
    <property type="chains" value="A=501-787"/>
</dbReference>
<dbReference type="PDB" id="5WR7">
    <property type="method" value="X-ray"/>
    <property type="resolution" value="2.76 A"/>
    <property type="chains" value="A=489-792"/>
</dbReference>
<dbReference type="PDB" id="6D1Y">
    <property type="method" value="X-ray"/>
    <property type="resolution" value="1.93 A"/>
    <property type="chains" value="A=479-796"/>
</dbReference>
<dbReference type="PDB" id="6D1Z">
    <property type="method" value="X-ray"/>
    <property type="resolution" value="1.87 A"/>
    <property type="chains" value="A=479-796"/>
</dbReference>
<dbReference type="PDB" id="6D20">
    <property type="method" value="X-ray"/>
    <property type="resolution" value="1.94 A"/>
    <property type="chains" value="A=479-796"/>
</dbReference>
<dbReference type="PDB" id="6D22">
    <property type="method" value="X-ray"/>
    <property type="resolution" value="2.46 A"/>
    <property type="chains" value="A=502-796"/>
</dbReference>
<dbReference type="PDB" id="6DKB">
    <property type="method" value="X-ray"/>
    <property type="resolution" value="2.68 A"/>
    <property type="chains" value="A=479-796"/>
</dbReference>
<dbReference type="PDB" id="6DKG">
    <property type="method" value="X-ray"/>
    <property type="resolution" value="2.53 A"/>
    <property type="chains" value="A=479-796"/>
</dbReference>
<dbReference type="PDB" id="6DKI">
    <property type="method" value="X-ray"/>
    <property type="resolution" value="2.11 A"/>
    <property type="chains" value="A=479-796"/>
</dbReference>
<dbReference type="PDB" id="6DKW">
    <property type="method" value="X-ray"/>
    <property type="resolution" value="2.91 A"/>
    <property type="chains" value="A/B=502-796"/>
</dbReference>
<dbReference type="PDB" id="6IQN">
    <property type="method" value="X-ray"/>
    <property type="resolution" value="2.54 A"/>
    <property type="chains" value="A/B=502-796"/>
</dbReference>
<dbReference type="PDB" id="6J5L">
    <property type="method" value="X-ray"/>
    <property type="resolution" value="2.30 A"/>
    <property type="chains" value="A=502-796"/>
</dbReference>
<dbReference type="PDB" id="6NPT">
    <property type="method" value="X-ray"/>
    <property type="resolution" value="2.19 A"/>
    <property type="chains" value="A=491-795"/>
</dbReference>
<dbReference type="PDB" id="6NSP">
    <property type="method" value="X-ray"/>
    <property type="resolution" value="2.31 A"/>
    <property type="chains" value="A=500-796"/>
</dbReference>
<dbReference type="PDB" id="6NSS">
    <property type="method" value="X-ray"/>
    <property type="resolution" value="1.97 A"/>
    <property type="chains" value="A=485-795"/>
</dbReference>
<dbReference type="PDB" id="6PL1">
    <property type="method" value="X-ray"/>
    <property type="resolution" value="2.03 A"/>
    <property type="chains" value="A=485-795"/>
</dbReference>
<dbReference type="PDB" id="6PL2">
    <property type="method" value="X-ray"/>
    <property type="resolution" value="2.59 A"/>
    <property type="chains" value="A=485-795"/>
</dbReference>
<dbReference type="PDB" id="6PL3">
    <property type="method" value="X-ray"/>
    <property type="resolution" value="3.00 A"/>
    <property type="chains" value="A=485-795"/>
</dbReference>
<dbReference type="PDB" id="6PL4">
    <property type="method" value="X-ray"/>
    <property type="resolution" value="2.06 A"/>
    <property type="chains" value="A=485-795"/>
</dbReference>
<dbReference type="PDB" id="6PMA">
    <property type="method" value="X-ray"/>
    <property type="resolution" value="2.53 A"/>
    <property type="chains" value="A=485-795"/>
</dbReference>
<dbReference type="PDB" id="6PMB">
    <property type="method" value="X-ray"/>
    <property type="resolution" value="2.81 A"/>
    <property type="chains" value="A=485-795"/>
</dbReference>
<dbReference type="PDB" id="6PMC">
    <property type="method" value="X-ray"/>
    <property type="resolution" value="2.19 A"/>
    <property type="chains" value="A=485-795"/>
</dbReference>
<dbReference type="PDB" id="6PME">
    <property type="method" value="X-ray"/>
    <property type="resolution" value="3.00 A"/>
    <property type="chains" value="A/B/C=485-795"/>
</dbReference>
<dbReference type="PDB" id="7N3T">
    <property type="method" value="X-ray"/>
    <property type="resolution" value="1.84 A"/>
    <property type="chains" value="A/B=36-382"/>
</dbReference>
<dbReference type="PDB" id="7VKM">
    <property type="method" value="X-ray"/>
    <property type="resolution" value="2.55 A"/>
    <property type="chains" value="A=502-796"/>
</dbReference>
<dbReference type="PDB" id="7VKN">
    <property type="method" value="X-ray"/>
    <property type="resolution" value="2.70 A"/>
    <property type="chains" value="A=502-796"/>
</dbReference>
<dbReference type="PDB" id="7VKO">
    <property type="method" value="X-ray"/>
    <property type="resolution" value="2.90 A"/>
    <property type="chains" value="A=502-796"/>
</dbReference>
<dbReference type="PDB" id="7XAF">
    <property type="method" value="X-ray"/>
    <property type="resolution" value="3.00 A"/>
    <property type="chains" value="A=498-796"/>
</dbReference>
<dbReference type="PDB" id="7XBI">
    <property type="method" value="X-ray"/>
    <property type="resolution" value="2.16 A"/>
    <property type="chains" value="A=485-795"/>
</dbReference>
<dbReference type="PDB" id="8J5W">
    <property type="method" value="X-ray"/>
    <property type="resolution" value="2.28 A"/>
    <property type="chains" value="A=484-796"/>
</dbReference>
<dbReference type="PDB" id="8J5X">
    <property type="method" value="X-ray"/>
    <property type="resolution" value="2.09 A"/>
    <property type="chains" value="A=498-796"/>
</dbReference>
<dbReference type="PDB" id="8J61">
    <property type="method" value="X-ray"/>
    <property type="resolution" value="3.05 A"/>
    <property type="chains" value="A=498-796"/>
</dbReference>
<dbReference type="PDB" id="8J63">
    <property type="method" value="X-ray"/>
    <property type="resolution" value="3.00 A"/>
    <property type="chains" value="A=498-796"/>
</dbReference>
<dbReference type="PDB" id="8YTD">
    <property type="method" value="X-ray"/>
    <property type="resolution" value="2.34 A"/>
    <property type="chains" value="A=281-382"/>
</dbReference>
<dbReference type="PDB" id="8YTE">
    <property type="method" value="X-ray"/>
    <property type="resolution" value="2.26 A"/>
    <property type="chains" value="A/C=281-382"/>
</dbReference>
<dbReference type="PDBsum" id="1HE7"/>
<dbReference type="PDBsum" id="1SHC"/>
<dbReference type="PDBsum" id="1WWA"/>
<dbReference type="PDBsum" id="1WWW"/>
<dbReference type="PDBsum" id="2IFG"/>
<dbReference type="PDBsum" id="2N90"/>
<dbReference type="PDBsum" id="4AOJ"/>
<dbReference type="PDBsum" id="4CRP"/>
<dbReference type="PDBsum" id="4F0I"/>
<dbReference type="PDBsum" id="4GT5"/>
<dbReference type="PDBsum" id="4PMM"/>
<dbReference type="PDBsum" id="4PMP"/>
<dbReference type="PDBsum" id="4PMS"/>
<dbReference type="PDBsum" id="4PMT"/>
<dbReference type="PDBsum" id="4YNE"/>
<dbReference type="PDBsum" id="4YPS"/>
<dbReference type="PDBsum" id="5H3Q"/>
<dbReference type="PDBsum" id="5I8A"/>
<dbReference type="PDBsum" id="5JFS"/>
<dbReference type="PDBsum" id="5JFV"/>
<dbReference type="PDBsum" id="5JFW"/>
<dbReference type="PDBsum" id="5JFX"/>
<dbReference type="PDBsum" id="5KMI"/>
<dbReference type="PDBsum" id="5KMJ"/>
<dbReference type="PDBsum" id="5KMK"/>
<dbReference type="PDBsum" id="5KML"/>
<dbReference type="PDBsum" id="5KMM"/>
<dbReference type="PDBsum" id="5KMN"/>
<dbReference type="PDBsum" id="5KMO"/>
<dbReference type="PDBsum" id="5KVT"/>
<dbReference type="PDBsum" id="5WR7"/>
<dbReference type="PDBsum" id="6D1Y"/>
<dbReference type="PDBsum" id="6D1Z"/>
<dbReference type="PDBsum" id="6D20"/>
<dbReference type="PDBsum" id="6D22"/>
<dbReference type="PDBsum" id="6DKB"/>
<dbReference type="PDBsum" id="6DKG"/>
<dbReference type="PDBsum" id="6DKI"/>
<dbReference type="PDBsum" id="6DKW"/>
<dbReference type="PDBsum" id="6IQN"/>
<dbReference type="PDBsum" id="6J5L"/>
<dbReference type="PDBsum" id="6NPT"/>
<dbReference type="PDBsum" id="6NSP"/>
<dbReference type="PDBsum" id="6NSS"/>
<dbReference type="PDBsum" id="6PL1"/>
<dbReference type="PDBsum" id="6PL2"/>
<dbReference type="PDBsum" id="6PL3"/>
<dbReference type="PDBsum" id="6PL4"/>
<dbReference type="PDBsum" id="6PMA"/>
<dbReference type="PDBsum" id="6PMB"/>
<dbReference type="PDBsum" id="6PMC"/>
<dbReference type="PDBsum" id="6PME"/>
<dbReference type="PDBsum" id="7N3T"/>
<dbReference type="PDBsum" id="7VKM"/>
<dbReference type="PDBsum" id="7VKN"/>
<dbReference type="PDBsum" id="7VKO"/>
<dbReference type="PDBsum" id="7XAF"/>
<dbReference type="PDBsum" id="7XBI"/>
<dbReference type="PDBsum" id="8J5W"/>
<dbReference type="PDBsum" id="8J5X"/>
<dbReference type="PDBsum" id="8J61"/>
<dbReference type="PDBsum" id="8J63"/>
<dbReference type="PDBsum" id="8YTD"/>
<dbReference type="PDBsum" id="8YTE"/>
<dbReference type="BMRB" id="P04629"/>
<dbReference type="SMR" id="P04629"/>
<dbReference type="BioGRID" id="110969">
    <property type="interactions" value="2050"/>
</dbReference>
<dbReference type="CORUM" id="P04629"/>
<dbReference type="DIP" id="DIP-5714N"/>
<dbReference type="ELM" id="P04629"/>
<dbReference type="FunCoup" id="P04629">
    <property type="interactions" value="1289"/>
</dbReference>
<dbReference type="IntAct" id="P04629">
    <property type="interactions" value="214"/>
</dbReference>
<dbReference type="MINT" id="P04629"/>
<dbReference type="STRING" id="9606.ENSP00000431418"/>
<dbReference type="BindingDB" id="P04629"/>
<dbReference type="ChEMBL" id="CHEMBL2815"/>
<dbReference type="DrugBank" id="DB17191">
    <property type="generic name" value="Altiratinib"/>
</dbReference>
<dbReference type="DrugBank" id="DB00321">
    <property type="generic name" value="Amitriptyline"/>
</dbReference>
<dbReference type="DrugBank" id="DB13926">
    <property type="generic name" value="Cenegermin"/>
</dbReference>
<dbReference type="DrugBank" id="DB11986">
    <property type="generic name" value="Entrectinib"/>
</dbReference>
<dbReference type="DrugBank" id="DB12010">
    <property type="generic name" value="Fostamatinib"/>
</dbReference>
<dbReference type="DrugBank" id="DB16056">
    <property type="generic name" value="GZ-389988"/>
</dbReference>
<dbReference type="DrugBank" id="DB00619">
    <property type="generic name" value="Imatinib"/>
</dbReference>
<dbReference type="DrugBank" id="DB14723">
    <property type="generic name" value="Larotrectinib"/>
</dbReference>
<dbReference type="DrugBank" id="DB15822">
    <property type="generic name" value="Pralsetinib"/>
</dbReference>
<dbReference type="DrugBank" id="DB08896">
    <property type="generic name" value="Regorafenib"/>
</dbReference>
<dbReference type="DrugBank" id="DB16826">
    <property type="generic name" value="Repotrectinib"/>
</dbReference>
<dbReference type="DrugBank" id="DB14896">
    <property type="generic name" value="Selitrectinib"/>
</dbReference>
<dbReference type="DrugBank" id="DB12441">
    <property type="generic name" value="Tavilermide"/>
</dbReference>
<dbReference type="DrugCentral" id="P04629"/>
<dbReference type="GuidetoPHARMACOLOGY" id="1817"/>
<dbReference type="GlyCosmos" id="P04629">
    <property type="glycosylation" value="13 sites, No reported glycans"/>
</dbReference>
<dbReference type="GlyGen" id="P04629">
    <property type="glycosylation" value="14 sites, 1 O-linked glycan (1 site)"/>
</dbReference>
<dbReference type="iPTMnet" id="P04629"/>
<dbReference type="PhosphoSitePlus" id="P04629"/>
<dbReference type="BioMuta" id="NTRK1"/>
<dbReference type="DMDM" id="94730402"/>
<dbReference type="CPTAC" id="CPTAC-3047"/>
<dbReference type="CPTAC" id="CPTAC-3048"/>
<dbReference type="jPOST" id="P04629"/>
<dbReference type="MassIVE" id="P04629"/>
<dbReference type="PaxDb" id="9606-ENSP00000431418"/>
<dbReference type="PeptideAtlas" id="P04629"/>
<dbReference type="ProteomicsDB" id="51723">
    <molecule id="P04629-1"/>
</dbReference>
<dbReference type="ProteomicsDB" id="51724">
    <molecule id="P04629-2"/>
</dbReference>
<dbReference type="ProteomicsDB" id="51725">
    <molecule id="P04629-3"/>
</dbReference>
<dbReference type="ProteomicsDB" id="51726">
    <molecule id="P04629-4"/>
</dbReference>
<dbReference type="Pumba" id="P04629"/>
<dbReference type="ABCD" id="P04629">
    <property type="antibodies" value="33 sequenced antibodies"/>
</dbReference>
<dbReference type="Antibodypedia" id="3896">
    <property type="antibodies" value="1652 antibodies from 47 providers"/>
</dbReference>
<dbReference type="DNASU" id="4914"/>
<dbReference type="Ensembl" id="ENST00000368196.7">
    <molecule id="P04629-2"/>
    <property type="protein sequence ID" value="ENSP00000357179.3"/>
    <property type="gene ID" value="ENSG00000198400.14"/>
</dbReference>
<dbReference type="Ensembl" id="ENST00000524377.7">
    <molecule id="P04629-1"/>
    <property type="protein sequence ID" value="ENSP00000431418.1"/>
    <property type="gene ID" value="ENSG00000198400.14"/>
</dbReference>
<dbReference type="GeneID" id="4914"/>
<dbReference type="KEGG" id="hsa:4914"/>
<dbReference type="MANE-Select" id="ENST00000524377.7">
    <property type="protein sequence ID" value="ENSP00000431418.1"/>
    <property type="RefSeq nucleotide sequence ID" value="NM_002529.4"/>
    <property type="RefSeq protein sequence ID" value="NP_002520.2"/>
</dbReference>
<dbReference type="UCSC" id="uc001fqf.2">
    <molecule id="P04629-1"/>
    <property type="organism name" value="human"/>
</dbReference>
<dbReference type="AGR" id="HGNC:8031"/>
<dbReference type="CTD" id="4914"/>
<dbReference type="DisGeNET" id="4914"/>
<dbReference type="GeneCards" id="NTRK1"/>
<dbReference type="GeneReviews" id="NTRK1"/>
<dbReference type="HGNC" id="HGNC:8031">
    <property type="gene designation" value="NTRK1"/>
</dbReference>
<dbReference type="HPA" id="ENSG00000198400">
    <property type="expression patterns" value="Tissue enhanced (adrenal)"/>
</dbReference>
<dbReference type="MalaCards" id="NTRK1"/>
<dbReference type="MIM" id="164970">
    <property type="type" value="gene"/>
</dbReference>
<dbReference type="MIM" id="191315">
    <property type="type" value="gene"/>
</dbReference>
<dbReference type="MIM" id="256800">
    <property type="type" value="phenotype"/>
</dbReference>
<dbReference type="neXtProt" id="NX_P04629"/>
<dbReference type="OpenTargets" id="ENSG00000198400"/>
<dbReference type="Orphanet" id="146">
    <property type="disease" value="Differentiated thyroid carcinoma"/>
</dbReference>
<dbReference type="Orphanet" id="99361">
    <property type="disease" value="Familial medullary thyroid carcinoma"/>
</dbReference>
<dbReference type="Orphanet" id="642">
    <property type="disease" value="Hereditary sensory and autonomic neuropathy type 4"/>
</dbReference>
<dbReference type="Orphanet" id="64752">
    <property type="disease" value="Hereditary sensory and autonomic neuropathy type 5"/>
</dbReference>
<dbReference type="PharmGKB" id="PA31817"/>
<dbReference type="VEuPathDB" id="HostDB:ENSG00000198400"/>
<dbReference type="eggNOG" id="KOG1026">
    <property type="taxonomic scope" value="Eukaryota"/>
</dbReference>
<dbReference type="GeneTree" id="ENSGT00940000159412"/>
<dbReference type="HOGENOM" id="CLU_000288_74_1_1"/>
<dbReference type="InParanoid" id="P04629"/>
<dbReference type="OMA" id="LTCHISA"/>
<dbReference type="OrthoDB" id="10005095at2759"/>
<dbReference type="PAN-GO" id="P04629">
    <property type="GO annotations" value="13 GO annotations based on evolutionary models"/>
</dbReference>
<dbReference type="PhylomeDB" id="P04629"/>
<dbReference type="TreeFam" id="TF106465"/>
<dbReference type="BRENDA" id="2.7.10.1">
    <property type="organism ID" value="2681"/>
</dbReference>
<dbReference type="PathwayCommons" id="P04629"/>
<dbReference type="Reactome" id="R-HSA-167021">
    <property type="pathway name" value="PLC-gamma1 signalling"/>
</dbReference>
<dbReference type="Reactome" id="R-HSA-167044">
    <property type="pathway name" value="Signalling to RAS"/>
</dbReference>
<dbReference type="Reactome" id="R-HSA-170968">
    <molecule id="P04629-1"/>
    <property type="pathway name" value="Frs2-mediated activation"/>
</dbReference>
<dbReference type="Reactome" id="R-HSA-170984">
    <property type="pathway name" value="ARMS-mediated activation"/>
</dbReference>
<dbReference type="Reactome" id="R-HSA-177504">
    <property type="pathway name" value="Retrograde neurotrophin signalling"/>
</dbReference>
<dbReference type="Reactome" id="R-HSA-187024">
    <property type="pathway name" value="NGF-independant TRKA activation"/>
</dbReference>
<dbReference type="Reactome" id="R-HSA-187042">
    <property type="pathway name" value="TRKA activation by NGF"/>
</dbReference>
<dbReference type="Reactome" id="R-HSA-187706">
    <property type="pathway name" value="Signalling to p38 via RIT and RIN"/>
</dbReference>
<dbReference type="Reactome" id="R-HSA-198203">
    <property type="pathway name" value="PI3K/AKT activation"/>
</dbReference>
<dbReference type="Reactome" id="R-HSA-198745">
    <property type="pathway name" value="Signalling to STAT3"/>
</dbReference>
<dbReference type="SignaLink" id="P04629"/>
<dbReference type="SIGNOR" id="P04629"/>
<dbReference type="BioGRID-ORCS" id="4914">
    <property type="hits" value="16 hits in 1198 CRISPR screens"/>
</dbReference>
<dbReference type="CD-CODE" id="8C2F96ED">
    <property type="entry name" value="Centrosome"/>
</dbReference>
<dbReference type="ChiTaRS" id="NTRK1">
    <property type="organism name" value="human"/>
</dbReference>
<dbReference type="EvolutionaryTrace" id="P04629"/>
<dbReference type="GenomeRNAi" id="4914"/>
<dbReference type="Pharos" id="P04629">
    <property type="development level" value="Tclin"/>
</dbReference>
<dbReference type="PRO" id="PR:P04629"/>
<dbReference type="Proteomes" id="UP000005640">
    <property type="component" value="Chromosome 1"/>
</dbReference>
<dbReference type="RNAct" id="P04629">
    <property type="molecule type" value="protein"/>
</dbReference>
<dbReference type="Bgee" id="ENSG00000198400">
    <property type="expression patterns" value="Expressed in dorsal root ganglion and 96 other cell types or tissues"/>
</dbReference>
<dbReference type="ExpressionAtlas" id="P04629">
    <property type="expression patterns" value="baseline and differential"/>
</dbReference>
<dbReference type="GO" id="GO:0030424">
    <property type="term" value="C:axon"/>
    <property type="evidence" value="ECO:0000318"/>
    <property type="project" value="GO_Central"/>
</dbReference>
<dbReference type="GO" id="GO:0009986">
    <property type="term" value="C:cell surface"/>
    <property type="evidence" value="ECO:0007669"/>
    <property type="project" value="Ensembl"/>
</dbReference>
<dbReference type="GO" id="GO:0030425">
    <property type="term" value="C:dendrite"/>
    <property type="evidence" value="ECO:0007669"/>
    <property type="project" value="Ensembl"/>
</dbReference>
<dbReference type="GO" id="GO:0005769">
    <property type="term" value="C:early endosome"/>
    <property type="evidence" value="ECO:0000250"/>
    <property type="project" value="UniProtKB"/>
</dbReference>
<dbReference type="GO" id="GO:0031901">
    <property type="term" value="C:early endosome membrane"/>
    <property type="evidence" value="ECO:0007669"/>
    <property type="project" value="UniProtKB-SubCell"/>
</dbReference>
<dbReference type="GO" id="GO:0010008">
    <property type="term" value="C:endosome membrane"/>
    <property type="evidence" value="ECO:0000304"/>
    <property type="project" value="Reactome"/>
</dbReference>
<dbReference type="GO" id="GO:0005770">
    <property type="term" value="C:late endosome"/>
    <property type="evidence" value="ECO:0000250"/>
    <property type="project" value="UniProtKB"/>
</dbReference>
<dbReference type="GO" id="GO:0031902">
    <property type="term" value="C:late endosome membrane"/>
    <property type="evidence" value="ECO:0007669"/>
    <property type="project" value="UniProtKB-SubCell"/>
</dbReference>
<dbReference type="GO" id="GO:0005739">
    <property type="term" value="C:mitochondrion"/>
    <property type="evidence" value="ECO:0007669"/>
    <property type="project" value="Ensembl"/>
</dbReference>
<dbReference type="GO" id="GO:0043025">
    <property type="term" value="C:neuronal cell body"/>
    <property type="evidence" value="ECO:0007669"/>
    <property type="project" value="Ensembl"/>
</dbReference>
<dbReference type="GO" id="GO:0005886">
    <property type="term" value="C:plasma membrane"/>
    <property type="evidence" value="ECO:0000314"/>
    <property type="project" value="MGI"/>
</dbReference>
<dbReference type="GO" id="GO:0032991">
    <property type="term" value="C:protein-containing complex"/>
    <property type="evidence" value="ECO:0000250"/>
    <property type="project" value="UniProtKB"/>
</dbReference>
<dbReference type="GO" id="GO:0043235">
    <property type="term" value="C:receptor complex"/>
    <property type="evidence" value="ECO:0000314"/>
    <property type="project" value="MGI"/>
</dbReference>
<dbReference type="GO" id="GO:0055038">
    <property type="term" value="C:recycling endosome membrane"/>
    <property type="evidence" value="ECO:0007669"/>
    <property type="project" value="UniProtKB-SubCell"/>
</dbReference>
<dbReference type="GO" id="GO:0005524">
    <property type="term" value="F:ATP binding"/>
    <property type="evidence" value="ECO:0007669"/>
    <property type="project" value="UniProtKB-KW"/>
</dbReference>
<dbReference type="GO" id="GO:0005004">
    <property type="term" value="F:GPI-linked ephrin receptor activity"/>
    <property type="evidence" value="ECO:0007669"/>
    <property type="project" value="Ensembl"/>
</dbReference>
<dbReference type="GO" id="GO:0042802">
    <property type="term" value="F:identical protein binding"/>
    <property type="evidence" value="ECO:0000353"/>
    <property type="project" value="IntAct"/>
</dbReference>
<dbReference type="GO" id="GO:0019900">
    <property type="term" value="F:kinase binding"/>
    <property type="evidence" value="ECO:0007669"/>
    <property type="project" value="Ensembl"/>
</dbReference>
<dbReference type="GO" id="GO:0048406">
    <property type="term" value="F:nerve growth factor binding"/>
    <property type="evidence" value="ECO:0000314"/>
    <property type="project" value="UniProtKB"/>
</dbReference>
<dbReference type="GO" id="GO:0010465">
    <property type="term" value="F:nerve growth factor receptor activity"/>
    <property type="evidence" value="ECO:0000314"/>
    <property type="project" value="UniProtKB"/>
</dbReference>
<dbReference type="GO" id="GO:0043121">
    <property type="term" value="F:neurotrophin binding"/>
    <property type="evidence" value="ECO:0000318"/>
    <property type="project" value="GO_Central"/>
</dbReference>
<dbReference type="GO" id="GO:0005166">
    <property type="term" value="F:neurotrophin p75 receptor binding"/>
    <property type="evidence" value="ECO:0007669"/>
    <property type="project" value="Ensembl"/>
</dbReference>
<dbReference type="GO" id="GO:0005030">
    <property type="term" value="F:neurotrophin receptor activity"/>
    <property type="evidence" value="ECO:0000318"/>
    <property type="project" value="GO_Central"/>
</dbReference>
<dbReference type="GO" id="GO:0042803">
    <property type="term" value="F:protein homodimerization activity"/>
    <property type="evidence" value="ECO:0000314"/>
    <property type="project" value="UniProtKB"/>
</dbReference>
<dbReference type="GO" id="GO:0004713">
    <property type="term" value="F:protein tyrosine kinase activity"/>
    <property type="evidence" value="ECO:0000314"/>
    <property type="project" value="UniProtKB"/>
</dbReference>
<dbReference type="GO" id="GO:0004714">
    <property type="term" value="F:transmembrane receptor protein tyrosine kinase activity"/>
    <property type="evidence" value="ECO:0000314"/>
    <property type="project" value="MGI"/>
</dbReference>
<dbReference type="GO" id="GO:0007411">
    <property type="term" value="P:axon guidance"/>
    <property type="evidence" value="ECO:0007669"/>
    <property type="project" value="Ensembl"/>
</dbReference>
<dbReference type="GO" id="GO:0060385">
    <property type="term" value="P:axonogenesis involved in innervation"/>
    <property type="evidence" value="ECO:0000250"/>
    <property type="project" value="UniProtKB"/>
</dbReference>
<dbReference type="GO" id="GO:0030183">
    <property type="term" value="P:B cell differentiation"/>
    <property type="evidence" value="ECO:0007669"/>
    <property type="project" value="Ensembl"/>
</dbReference>
<dbReference type="GO" id="GO:0061368">
    <property type="term" value="P:behavioral response to formalin induced pain"/>
    <property type="evidence" value="ECO:0007669"/>
    <property type="project" value="Ensembl"/>
</dbReference>
<dbReference type="GO" id="GO:0007169">
    <property type="term" value="P:cell surface receptor protein tyrosine kinase signaling pathway"/>
    <property type="evidence" value="ECO:0000318"/>
    <property type="project" value="GO_Central"/>
</dbReference>
<dbReference type="GO" id="GO:1990090">
    <property type="term" value="P:cellular response to nerve growth factor stimulus"/>
    <property type="evidence" value="ECO:0000315"/>
    <property type="project" value="UniProtKB"/>
</dbReference>
<dbReference type="GO" id="GO:0071316">
    <property type="term" value="P:cellular response to nicotine"/>
    <property type="evidence" value="ECO:0007669"/>
    <property type="project" value="Ensembl"/>
</dbReference>
<dbReference type="GO" id="GO:0007623">
    <property type="term" value="P:circadian rhythm"/>
    <property type="evidence" value="ECO:0007669"/>
    <property type="project" value="Ensembl"/>
</dbReference>
<dbReference type="GO" id="GO:0050966">
    <property type="term" value="P:detection of mechanical stimulus involved in sensory perception of pain"/>
    <property type="evidence" value="ECO:0007669"/>
    <property type="project" value="Ensembl"/>
</dbReference>
<dbReference type="GO" id="GO:0050965">
    <property type="term" value="P:detection of temperature stimulus involved in sensory perception of pain"/>
    <property type="evidence" value="ECO:0007669"/>
    <property type="project" value="Ensembl"/>
</dbReference>
<dbReference type="GO" id="GO:0007611">
    <property type="term" value="P:learning or memory"/>
    <property type="evidence" value="ECO:0007669"/>
    <property type="project" value="Ensembl"/>
</dbReference>
<dbReference type="GO" id="GO:0042490">
    <property type="term" value="P:mechanoreceptor differentiation"/>
    <property type="evidence" value="ECO:0007669"/>
    <property type="project" value="Ensembl"/>
</dbReference>
<dbReference type="GO" id="GO:0043066">
    <property type="term" value="P:negative regulation of apoptotic process"/>
    <property type="evidence" value="ECO:0000304"/>
    <property type="project" value="ARUK-UCL"/>
</dbReference>
<dbReference type="GO" id="GO:0008285">
    <property type="term" value="P:negative regulation of cell population proliferation"/>
    <property type="evidence" value="ECO:0000314"/>
    <property type="project" value="UniProtKB"/>
</dbReference>
<dbReference type="GO" id="GO:0043524">
    <property type="term" value="P:negative regulation of neuron apoptotic process"/>
    <property type="evidence" value="ECO:0000250"/>
    <property type="project" value="UniProtKB"/>
</dbReference>
<dbReference type="GO" id="GO:0038180">
    <property type="term" value="P:nerve growth factor signaling pathway"/>
    <property type="evidence" value="ECO:0000315"/>
    <property type="project" value="UniProtKB"/>
</dbReference>
<dbReference type="GO" id="GO:0051402">
    <property type="term" value="P:neuron apoptotic process"/>
    <property type="evidence" value="ECO:0007669"/>
    <property type="project" value="Ensembl"/>
</dbReference>
<dbReference type="GO" id="GO:0048666">
    <property type="term" value="P:neuron development"/>
    <property type="evidence" value="ECO:0000314"/>
    <property type="project" value="MGI"/>
</dbReference>
<dbReference type="GO" id="GO:0031175">
    <property type="term" value="P:neuron projection development"/>
    <property type="evidence" value="ECO:0000314"/>
    <property type="project" value="MGI"/>
</dbReference>
<dbReference type="GO" id="GO:0048011">
    <property type="term" value="P:neurotrophin TRK receptor signaling pathway"/>
    <property type="evidence" value="ECO:0000314"/>
    <property type="project" value="UniProtKB"/>
</dbReference>
<dbReference type="GO" id="GO:0021553">
    <property type="term" value="P:olfactory nerve development"/>
    <property type="evidence" value="ECO:0007669"/>
    <property type="project" value="Ensembl"/>
</dbReference>
<dbReference type="GO" id="GO:0038083">
    <property type="term" value="P:peptidyl-tyrosine autophosphorylation"/>
    <property type="evidence" value="ECO:0000314"/>
    <property type="project" value="MGI"/>
</dbReference>
<dbReference type="GO" id="GO:0018108">
    <property type="term" value="P:peptidyl-tyrosine phosphorylation"/>
    <property type="evidence" value="ECO:0000314"/>
    <property type="project" value="UniProtKB"/>
</dbReference>
<dbReference type="GO" id="GO:0045766">
    <property type="term" value="P:positive regulation of angiogenesis"/>
    <property type="evidence" value="ECO:0000314"/>
    <property type="project" value="UniProtKB"/>
</dbReference>
<dbReference type="GO" id="GO:0070374">
    <property type="term" value="P:positive regulation of ERK1 and ERK2 cascade"/>
    <property type="evidence" value="ECO:0000314"/>
    <property type="project" value="UniProtKB"/>
</dbReference>
<dbReference type="GO" id="GO:0043547">
    <property type="term" value="P:positive regulation of GTPase activity"/>
    <property type="evidence" value="ECO:0000314"/>
    <property type="project" value="UniProtKB"/>
</dbReference>
<dbReference type="GO" id="GO:0010976">
    <property type="term" value="P:positive regulation of neuron projection development"/>
    <property type="evidence" value="ECO:0000314"/>
    <property type="project" value="UniProtKB"/>
</dbReference>
<dbReference type="GO" id="GO:0051092">
    <property type="term" value="P:positive regulation of NF-kappaB transcription factor activity"/>
    <property type="evidence" value="ECO:0000314"/>
    <property type="project" value="UniProtKB"/>
</dbReference>
<dbReference type="GO" id="GO:0051897">
    <property type="term" value="P:positive regulation of phosphatidylinositol 3-kinase/protein kinase B signal transduction"/>
    <property type="evidence" value="ECO:0000318"/>
    <property type="project" value="GO_Central"/>
</dbReference>
<dbReference type="GO" id="GO:0043068">
    <property type="term" value="P:positive regulation of programmed cell death"/>
    <property type="evidence" value="ECO:0000250"/>
    <property type="project" value="UniProtKB"/>
</dbReference>
<dbReference type="GO" id="GO:0046579">
    <property type="term" value="P:positive regulation of Ras protein signal transduction"/>
    <property type="evidence" value="ECO:0000314"/>
    <property type="project" value="UniProtKB"/>
</dbReference>
<dbReference type="GO" id="GO:0051965">
    <property type="term" value="P:positive regulation of synapse assembly"/>
    <property type="evidence" value="ECO:0007669"/>
    <property type="project" value="Ensembl"/>
</dbReference>
<dbReference type="GO" id="GO:0051968">
    <property type="term" value="P:positive regulation of synaptic transmission, glutamatergic"/>
    <property type="evidence" value="ECO:0007669"/>
    <property type="project" value="Ensembl"/>
</dbReference>
<dbReference type="GO" id="GO:0010623">
    <property type="term" value="P:programmed cell death involved in cell development"/>
    <property type="evidence" value="ECO:0000250"/>
    <property type="project" value="UniProtKB"/>
</dbReference>
<dbReference type="GO" id="GO:0046777">
    <property type="term" value="P:protein autophosphorylation"/>
    <property type="evidence" value="ECO:0000314"/>
    <property type="project" value="UniProtKB"/>
</dbReference>
<dbReference type="GO" id="GO:0006468">
    <property type="term" value="P:protein phosphorylation"/>
    <property type="evidence" value="ECO:0000314"/>
    <property type="project" value="UniProtKB"/>
</dbReference>
<dbReference type="GO" id="GO:0048678">
    <property type="term" value="P:response to axon injury"/>
    <property type="evidence" value="ECO:0007669"/>
    <property type="project" value="Ensembl"/>
</dbReference>
<dbReference type="GO" id="GO:0051602">
    <property type="term" value="P:response to electrical stimulus"/>
    <property type="evidence" value="ECO:0007669"/>
    <property type="project" value="Ensembl"/>
</dbReference>
<dbReference type="GO" id="GO:0051599">
    <property type="term" value="P:response to hydrostatic pressure"/>
    <property type="evidence" value="ECO:0007669"/>
    <property type="project" value="Ensembl"/>
</dbReference>
<dbReference type="GO" id="GO:0031667">
    <property type="term" value="P:response to nutrient levels"/>
    <property type="evidence" value="ECO:0007669"/>
    <property type="project" value="Ensembl"/>
</dbReference>
<dbReference type="GO" id="GO:0009410">
    <property type="term" value="P:response to xenobiotic stimulus"/>
    <property type="evidence" value="ECO:0007669"/>
    <property type="project" value="Ensembl"/>
</dbReference>
<dbReference type="GO" id="GO:0060009">
    <property type="term" value="P:Sertoli cell development"/>
    <property type="evidence" value="ECO:0007669"/>
    <property type="project" value="Ensembl"/>
</dbReference>
<dbReference type="GO" id="GO:0007283">
    <property type="term" value="P:spermatogenesis"/>
    <property type="evidence" value="ECO:0007669"/>
    <property type="project" value="Ensembl"/>
</dbReference>
<dbReference type="GO" id="GO:0048485">
    <property type="term" value="P:sympathetic nervous system development"/>
    <property type="evidence" value="ECO:0000250"/>
    <property type="project" value="UniProtKB"/>
</dbReference>
<dbReference type="CDD" id="cd04972">
    <property type="entry name" value="Ig_TrkABC_d4"/>
    <property type="match status" value="1"/>
</dbReference>
<dbReference type="CDD" id="cd04971">
    <property type="entry name" value="IgI_TrKABC_d5"/>
    <property type="match status" value="1"/>
</dbReference>
<dbReference type="CDD" id="cd05092">
    <property type="entry name" value="PTKc_TrkA"/>
    <property type="match status" value="1"/>
</dbReference>
<dbReference type="FunFam" id="1.10.510.10:FF:000034">
    <property type="entry name" value="Tyrosine-protein kinase receptor"/>
    <property type="match status" value="1"/>
</dbReference>
<dbReference type="FunFam" id="2.60.40.10:FF:000522">
    <property type="entry name" value="Tyrosine-protein kinase receptor"/>
    <property type="match status" value="1"/>
</dbReference>
<dbReference type="FunFam" id="2.60.40.10:FF:000664">
    <property type="entry name" value="Tyrosine-protein kinase receptor"/>
    <property type="match status" value="1"/>
</dbReference>
<dbReference type="FunFam" id="3.30.200.20:FF:000033">
    <property type="entry name" value="Tyrosine-protein kinase receptor"/>
    <property type="match status" value="1"/>
</dbReference>
<dbReference type="FunFam" id="3.80.10.10:FF:000163">
    <property type="entry name" value="Tyrosine-protein kinase receptor"/>
    <property type="match status" value="1"/>
</dbReference>
<dbReference type="Gene3D" id="2.60.40.10">
    <property type="entry name" value="Immunoglobulins"/>
    <property type="match status" value="2"/>
</dbReference>
<dbReference type="Gene3D" id="3.30.200.20">
    <property type="entry name" value="Phosphorylase Kinase, domain 1"/>
    <property type="match status" value="1"/>
</dbReference>
<dbReference type="Gene3D" id="3.80.10.10">
    <property type="entry name" value="Ribonuclease Inhibitor"/>
    <property type="match status" value="1"/>
</dbReference>
<dbReference type="Gene3D" id="1.10.510.10">
    <property type="entry name" value="Transferase(Phosphotransferase) domain 1"/>
    <property type="match status" value="1"/>
</dbReference>
<dbReference type="IDEAL" id="IID00535"/>
<dbReference type="InterPro" id="IPR000483">
    <property type="entry name" value="Cys-rich_flank_reg_C"/>
</dbReference>
<dbReference type="InterPro" id="IPR007110">
    <property type="entry name" value="Ig-like_dom"/>
</dbReference>
<dbReference type="InterPro" id="IPR036179">
    <property type="entry name" value="Ig-like_dom_sf"/>
</dbReference>
<dbReference type="InterPro" id="IPR013783">
    <property type="entry name" value="Ig-like_fold"/>
</dbReference>
<dbReference type="InterPro" id="IPR011009">
    <property type="entry name" value="Kinase-like_dom_sf"/>
</dbReference>
<dbReference type="InterPro" id="IPR001611">
    <property type="entry name" value="Leu-rich_rpt"/>
</dbReference>
<dbReference type="InterPro" id="IPR032675">
    <property type="entry name" value="LRR_dom_sf"/>
</dbReference>
<dbReference type="InterPro" id="IPR020777">
    <property type="entry name" value="NTRK"/>
</dbReference>
<dbReference type="InterPro" id="IPR020461">
    <property type="entry name" value="NTRK1"/>
</dbReference>
<dbReference type="InterPro" id="IPR031635">
    <property type="entry name" value="NTRK_LRRCT"/>
</dbReference>
<dbReference type="InterPro" id="IPR000719">
    <property type="entry name" value="Prot_kinase_dom"/>
</dbReference>
<dbReference type="InterPro" id="IPR017441">
    <property type="entry name" value="Protein_kinase_ATP_BS"/>
</dbReference>
<dbReference type="InterPro" id="IPR050122">
    <property type="entry name" value="RTK"/>
</dbReference>
<dbReference type="InterPro" id="IPR001245">
    <property type="entry name" value="Ser-Thr/Tyr_kinase_cat_dom"/>
</dbReference>
<dbReference type="InterPro" id="IPR040665">
    <property type="entry name" value="TrkA_TMD"/>
</dbReference>
<dbReference type="InterPro" id="IPR008266">
    <property type="entry name" value="Tyr_kinase_AS"/>
</dbReference>
<dbReference type="InterPro" id="IPR020635">
    <property type="entry name" value="Tyr_kinase_cat_dom"/>
</dbReference>
<dbReference type="InterPro" id="IPR002011">
    <property type="entry name" value="Tyr_kinase_rcpt_2_CS"/>
</dbReference>
<dbReference type="PANTHER" id="PTHR24416:SF370">
    <property type="entry name" value="HIGH AFFINITY NERVE GROWTH FACTOR RECEPTOR"/>
    <property type="match status" value="1"/>
</dbReference>
<dbReference type="PANTHER" id="PTHR24416">
    <property type="entry name" value="TYROSINE-PROTEIN KINASE RECEPTOR"/>
    <property type="match status" value="1"/>
</dbReference>
<dbReference type="Pfam" id="PF13855">
    <property type="entry name" value="LRR_8"/>
    <property type="match status" value="1"/>
</dbReference>
<dbReference type="Pfam" id="PF16920">
    <property type="entry name" value="LRRCT_2"/>
    <property type="match status" value="1"/>
</dbReference>
<dbReference type="Pfam" id="PF07714">
    <property type="entry name" value="PK_Tyr_Ser-Thr"/>
    <property type="match status" value="1"/>
</dbReference>
<dbReference type="Pfam" id="PF18613">
    <property type="entry name" value="TrkA_TMD"/>
    <property type="match status" value="1"/>
</dbReference>
<dbReference type="PRINTS" id="PR01939">
    <property type="entry name" value="NTKRECEPTOR"/>
</dbReference>
<dbReference type="PRINTS" id="PR01940">
    <property type="entry name" value="NTKRECEPTOR1"/>
</dbReference>
<dbReference type="PRINTS" id="PR00109">
    <property type="entry name" value="TYRKINASE"/>
</dbReference>
<dbReference type="SMART" id="SM00082">
    <property type="entry name" value="LRRCT"/>
    <property type="match status" value="1"/>
</dbReference>
<dbReference type="SMART" id="SM00219">
    <property type="entry name" value="TyrKc"/>
    <property type="match status" value="1"/>
</dbReference>
<dbReference type="SUPFAM" id="SSF48726">
    <property type="entry name" value="Immunoglobulin"/>
    <property type="match status" value="2"/>
</dbReference>
<dbReference type="SUPFAM" id="SSF52058">
    <property type="entry name" value="L domain-like"/>
    <property type="match status" value="1"/>
</dbReference>
<dbReference type="SUPFAM" id="SSF56112">
    <property type="entry name" value="Protein kinase-like (PK-like)"/>
    <property type="match status" value="1"/>
</dbReference>
<dbReference type="PROSITE" id="PS50835">
    <property type="entry name" value="IG_LIKE"/>
    <property type="match status" value="1"/>
</dbReference>
<dbReference type="PROSITE" id="PS00107">
    <property type="entry name" value="PROTEIN_KINASE_ATP"/>
    <property type="match status" value="1"/>
</dbReference>
<dbReference type="PROSITE" id="PS50011">
    <property type="entry name" value="PROTEIN_KINASE_DOM"/>
    <property type="match status" value="1"/>
</dbReference>
<dbReference type="PROSITE" id="PS00109">
    <property type="entry name" value="PROTEIN_KINASE_TYR"/>
    <property type="match status" value="1"/>
</dbReference>
<dbReference type="PROSITE" id="PS00239">
    <property type="entry name" value="RECEPTOR_TYR_KIN_II"/>
    <property type="match status" value="1"/>
</dbReference>
<evidence type="ECO:0000250" key="1"/>
<evidence type="ECO:0000250" key="2">
    <source>
        <dbReference type="UniProtKB" id="P35739"/>
    </source>
</evidence>
<evidence type="ECO:0000250" key="3">
    <source>
        <dbReference type="UniProtKB" id="Q3UFB7"/>
    </source>
</evidence>
<evidence type="ECO:0000255" key="4"/>
<evidence type="ECO:0000255" key="5">
    <source>
        <dbReference type="PROSITE-ProRule" id="PRU00114"/>
    </source>
</evidence>
<evidence type="ECO:0000255" key="6">
    <source>
        <dbReference type="PROSITE-ProRule" id="PRU00159"/>
    </source>
</evidence>
<evidence type="ECO:0000255" key="7">
    <source>
        <dbReference type="PROSITE-ProRule" id="PRU10028"/>
    </source>
</evidence>
<evidence type="ECO:0000269" key="8">
    <source>
    </source>
</evidence>
<evidence type="ECO:0000269" key="9">
    <source>
    </source>
</evidence>
<evidence type="ECO:0000269" key="10">
    <source>
    </source>
</evidence>
<evidence type="ECO:0000269" key="11">
    <source>
    </source>
</evidence>
<evidence type="ECO:0000269" key="12">
    <source>
    </source>
</evidence>
<evidence type="ECO:0000269" key="13">
    <source>
    </source>
</evidence>
<evidence type="ECO:0000269" key="14">
    <source>
    </source>
</evidence>
<evidence type="ECO:0000269" key="15">
    <source>
    </source>
</evidence>
<evidence type="ECO:0000269" key="16">
    <source>
    </source>
</evidence>
<evidence type="ECO:0000269" key="17">
    <source>
    </source>
</evidence>
<evidence type="ECO:0000269" key="18">
    <source>
    </source>
</evidence>
<evidence type="ECO:0000269" key="19">
    <source>
    </source>
</evidence>
<evidence type="ECO:0000269" key="20">
    <source>
    </source>
</evidence>
<evidence type="ECO:0000269" key="21">
    <source>
    </source>
</evidence>
<evidence type="ECO:0000269" key="22">
    <source>
    </source>
</evidence>
<evidence type="ECO:0000269" key="23">
    <source>
    </source>
</evidence>
<evidence type="ECO:0000269" key="24">
    <source>
    </source>
</evidence>
<evidence type="ECO:0000269" key="25">
    <source>
    </source>
</evidence>
<evidence type="ECO:0000269" key="26">
    <source>
    </source>
</evidence>
<evidence type="ECO:0000269" key="27">
    <source>
    </source>
</evidence>
<evidence type="ECO:0000269" key="28">
    <source>
    </source>
</evidence>
<evidence type="ECO:0000269" key="29">
    <source>
    </source>
</evidence>
<evidence type="ECO:0000269" key="30">
    <source>
    </source>
</evidence>
<evidence type="ECO:0000269" key="31">
    <source>
    </source>
</evidence>
<evidence type="ECO:0000269" key="32">
    <source>
    </source>
</evidence>
<evidence type="ECO:0000269" key="33">
    <source>
    </source>
</evidence>
<evidence type="ECO:0000269" key="34">
    <source>
    </source>
</evidence>
<evidence type="ECO:0000269" key="35">
    <source>
    </source>
</evidence>
<evidence type="ECO:0000269" key="36">
    <source>
    </source>
</evidence>
<evidence type="ECO:0000269" key="37">
    <source>
    </source>
</evidence>
<evidence type="ECO:0000269" key="38">
    <source>
    </source>
</evidence>
<evidence type="ECO:0000269" key="39">
    <source>
    </source>
</evidence>
<evidence type="ECO:0000269" key="40">
    <source>
    </source>
</evidence>
<evidence type="ECO:0000269" key="41">
    <source>
    </source>
</evidence>
<evidence type="ECO:0000269" key="42">
    <source>
    </source>
</evidence>
<evidence type="ECO:0000303" key="43">
    <source>
    </source>
</evidence>
<evidence type="ECO:0000303" key="44">
    <source>
    </source>
</evidence>
<evidence type="ECO:0000303" key="45">
    <source>
    </source>
</evidence>
<evidence type="ECO:0000303" key="46">
    <source>
    </source>
</evidence>
<evidence type="ECO:0000305" key="47"/>
<evidence type="ECO:0007744" key="48">
    <source>
        <dbReference type="PDB" id="1HE7"/>
    </source>
</evidence>
<evidence type="ECO:0007744" key="49">
    <source>
        <dbReference type="PDB" id="1WWA"/>
    </source>
</evidence>
<evidence type="ECO:0007744" key="50">
    <source>
        <dbReference type="PDB" id="1WWW"/>
    </source>
</evidence>
<evidence type="ECO:0007744" key="51">
    <source>
        <dbReference type="PDB" id="2IFG"/>
    </source>
</evidence>
<evidence type="ECO:0007744" key="52">
    <source>
        <dbReference type="PDB" id="4CRP"/>
    </source>
</evidence>
<evidence type="ECO:0007829" key="53">
    <source>
        <dbReference type="PDB" id="1SHC"/>
    </source>
</evidence>
<evidence type="ECO:0007829" key="54">
    <source>
        <dbReference type="PDB" id="2N90"/>
    </source>
</evidence>
<evidence type="ECO:0007829" key="55">
    <source>
        <dbReference type="PDB" id="4F0I"/>
    </source>
</evidence>
<evidence type="ECO:0007829" key="56">
    <source>
        <dbReference type="PDB" id="4PMP"/>
    </source>
</evidence>
<evidence type="ECO:0007829" key="57">
    <source>
        <dbReference type="PDB" id="5JFV"/>
    </source>
</evidence>
<evidence type="ECO:0007829" key="58">
    <source>
        <dbReference type="PDB" id="5JFW"/>
    </source>
</evidence>
<evidence type="ECO:0007829" key="59">
    <source>
        <dbReference type="PDB" id="5KMI"/>
    </source>
</evidence>
<evidence type="ECO:0007829" key="60">
    <source>
        <dbReference type="PDB" id="5KML"/>
    </source>
</evidence>
<evidence type="ECO:0007829" key="61">
    <source>
        <dbReference type="PDB" id="6NSS"/>
    </source>
</evidence>
<evidence type="ECO:0007829" key="62">
    <source>
        <dbReference type="PDB" id="7N3T"/>
    </source>
</evidence>
<evidence type="ECO:0007829" key="63">
    <source>
        <dbReference type="PDB" id="7XBI"/>
    </source>
</evidence>
<evidence type="ECO:0007829" key="64">
    <source>
        <dbReference type="PDB" id="8J63"/>
    </source>
</evidence>
<evidence type="ECO:0007829" key="65">
    <source>
        <dbReference type="PDB" id="8YTD"/>
    </source>
</evidence>
<keyword id="KW-0002">3D-structure</keyword>
<keyword id="KW-0025">Alternative splicing</keyword>
<keyword id="KW-0067">ATP-binding</keyword>
<keyword id="KW-1003">Cell membrane</keyword>
<keyword id="KW-0160">Chromosomal rearrangement</keyword>
<keyword id="KW-0217">Developmental protein</keyword>
<keyword id="KW-0221">Differentiation</keyword>
<keyword id="KW-0225">Disease variant</keyword>
<keyword id="KW-1015">Disulfide bond</keyword>
<keyword id="KW-0967">Endosome</keyword>
<keyword id="KW-0325">Glycoprotein</keyword>
<keyword id="KW-0393">Immunoglobulin domain</keyword>
<keyword id="KW-0418">Kinase</keyword>
<keyword id="KW-0433">Leucine-rich repeat</keyword>
<keyword id="KW-0472">Membrane</keyword>
<keyword id="KW-0524">Neurogenesis</keyword>
<keyword id="KW-0547">Nucleotide-binding</keyword>
<keyword id="KW-0597">Phosphoprotein</keyword>
<keyword id="KW-1267">Proteomics identification</keyword>
<keyword id="KW-0656">Proto-oncogene</keyword>
<keyword id="KW-0675">Receptor</keyword>
<keyword id="KW-1185">Reference proteome</keyword>
<keyword id="KW-0677">Repeat</keyword>
<keyword id="KW-0732">Signal</keyword>
<keyword id="KW-0808">Transferase</keyword>
<keyword id="KW-0812">Transmembrane</keyword>
<keyword id="KW-1133">Transmembrane helix</keyword>
<keyword id="KW-0829">Tyrosine-protein kinase</keyword>
<keyword id="KW-0832">Ubl conjugation</keyword>
<comment type="function">
    <text evidence="2 3 18 20 22 23 26 27 30 32 33 40 41">Receptor tyrosine kinase involved in the development and the maturation of the central and peripheral nervous systems through regulation of proliferation, differentiation and survival of sympathetic and nervous neurons. High affinity receptor for NGF which is its primary ligand (PubMed:1281417, PubMed:15488758, PubMed:17196528, PubMed:1849459, PubMed:1850821, PubMed:22649032, PubMed:27445338, PubMed:8325889). Can also bind and be activated by NTF3/neurotrophin-3. However, NTF3 only supports axonal extension through NTRK1 but has no effect on neuron survival (By similarity). Upon dimeric NGF ligand-binding, undergoes homodimerization, autophosphorylation and activation (PubMed:1281417). Recruits, phosphorylates and/or activates several downstream effectors including SHC1, FRS2, SH2B1, SH2B2 and PLCG1 that regulate distinct overlapping signaling cascades driving cell survival and differentiation. Through SHC1 and FRS2 activates a GRB2-Ras-MAPK cascade that regulates cell differentiation and survival. Through PLCG1 controls NF-Kappa-B activation and the transcription of genes involved in cell survival. Through SHC1 and SH2B1 controls a Ras-PI3 kinase-AKT1 signaling cascade that is also regulating survival. In absence of ligand and activation, may promote cell death, making the survival of neurons dependent on trophic factors.</text>
</comment>
<comment type="function">
    <molecule>Isoform TrkA-III</molecule>
    <text evidence="22">Resistant to NGF, it constitutively activates AKT1 and NF-kappa-B and is unable to activate the Ras-MAPK signaling cascade. Antagonizes the anti-proliferative NGF-NTRK1 signaling that promotes neuronal precursors differentiation. Isoform TrkA-III promotes angiogenesis and has oncogenic activity when overexpressed.</text>
</comment>
<comment type="catalytic activity">
    <reaction evidence="7 20 37">
        <text>L-tyrosyl-[protein] + ATP = O-phospho-L-tyrosyl-[protein] + ADP + H(+)</text>
        <dbReference type="Rhea" id="RHEA:10596"/>
        <dbReference type="Rhea" id="RHEA-COMP:10136"/>
        <dbReference type="Rhea" id="RHEA-COMP:20101"/>
        <dbReference type="ChEBI" id="CHEBI:15378"/>
        <dbReference type="ChEBI" id="CHEBI:30616"/>
        <dbReference type="ChEBI" id="CHEBI:46858"/>
        <dbReference type="ChEBI" id="CHEBI:61978"/>
        <dbReference type="ChEBI" id="CHEBI:456216"/>
        <dbReference type="EC" id="2.7.10.1"/>
    </reaction>
</comment>
<comment type="activity regulation">
    <text evidence="3">The pro-survival signaling effect of NTRK1 in neurons requires its endocytosis into signaling early endosomes and its retrograde axonal transport. This is regulated by different proteins including CFL1, RAC1 and SORT1. NTF3 is unable to induce this signaling probably due to the lability of the NTF3-NTRK1 complex in endosomes. SH2D1A inhibits the autophosphorylation of the receptor, and alters the recruitment and activation of downstream effectors and signaling cascades (By similarity). Regulated by NGFR (By similarity).</text>
</comment>
<comment type="subunit">
    <text evidence="1 2 13 18 20 22 23 28 30 31 32 38 40 41">Exists in a dynamic equilibrium between monomeric (low affinity) and dimeric (high affinity) structures. Homodimerization is induced by binding of a NGF dimer (PubMed:10490030, PubMed:1281417, PubMed:17196528). Interacts with SQSTM1; bridges NTRK1 to NGFR (PubMed:11244088). Forms a ternary complex with NGFR and KIDINS220; this complex is affected by the expression levels of KIDINS220 and an increase in KIDINS220 expression leads to a decreased association of NGFR and NTRK1 (By similarity). Interacts with SH2D1A; regulates NTRK1 (By similarity). Interacts (phosphorylated upon activation by NGF) with SHC1; mediates SHC1 phosphorylation and activation (PubMed:15488758, PubMed:8155326). Interacts (phosphorylated upon activation by NGF) with PLCG1; mediates PLCG1 phosphorylation and activation (PubMed:15488758, PubMed:7510697). Interacts (phosphorylated) with SH2B1 and SH2B2 (By similarity). Interacts with GRB2 (PubMed:15488758). Interacts with PIK3R1 (PubMed:15488758). Interacts with FRS2 (PubMed:15488758). Interacts with SORT1; may regulate NTRK1 anterograde axonal transport (PubMed:21102451). Interacts with RAB7A (By similarity). Found in a complex, at least composed of KIDINS220, MAGI2, NTRK1 and RAPGEF2; the complex is mainly formed at late endosomes in a nerve growth factor (NGF)-dependent manner (By similarity). Interacts with RAPGEF2; the interaction is strengthened after NGF stimulation (By similarity). Interacts with PTPRS (By similarity). Interacts with USP36; USP36 does not deubiquitinate NTRK1 (PubMed:27445338). Interacts with GGA3 (PubMed:26446845). Interacts with TSPAN1; this interaction promotes NTRK1 stability (By similarity).</text>
</comment>
<comment type="interaction">
    <interactant intactId="EBI-1028226">
        <id>P04629</id>
    </interactant>
    <interactant intactId="EBI-302641">
        <id>P05067-4</id>
        <label>APP</label>
    </interactant>
    <organismsDiffer>false</organismsDiffer>
    <experiments>7</experiments>
</comment>
<comment type="interaction">
    <interactant intactId="EBI-1028226">
        <id>P04629</id>
    </interactant>
    <interactant intactId="EBI-518228">
        <id>P22681</id>
        <label>CBL</label>
    </interactant>
    <organismsDiffer>false</organismsDiffer>
    <experiments>2</experiments>
</comment>
<comment type="interaction">
    <interactant intactId="EBI-1028226">
        <id>P04629</id>
    </interactant>
    <interactant intactId="EBI-352572">
        <id>P08238</id>
        <label>HSP90AB1</label>
    </interactant>
    <organismsDiffer>false</organismsDiffer>
    <experiments>3</experiments>
</comment>
<comment type="interaction">
    <interactant intactId="EBI-1028226">
        <id>P04629</id>
    </interactant>
    <interactant intactId="EBI-1028250">
        <id>P01138</id>
        <label>NGF</label>
    </interactant>
    <organismsDiffer>false</organismsDiffer>
    <experiments>3</experiments>
</comment>
<comment type="interaction">
    <interactant intactId="EBI-1028226">
        <id>P04629</id>
    </interactant>
    <interactant intactId="EBI-9249861">
        <id>PRO_0000019600</id>
        <label>NGF</label>
        <dbReference type="UniProtKB" id="P01138"/>
    </interactant>
    <organismsDiffer>false</organismsDiffer>
    <experiments>2</experiments>
</comment>
<comment type="interaction">
    <interactant intactId="EBI-1028226">
        <id>P04629</id>
    </interactant>
    <interactant intactId="EBI-1028226">
        <id>P04629</id>
        <label>NTRK1</label>
    </interactant>
    <organismsDiffer>false</organismsDiffer>
    <experiments>3</experiments>
</comment>
<comment type="interaction">
    <interactant intactId="EBI-1028226">
        <id>P04629</id>
    </interactant>
    <interactant intactId="EBI-3936704">
        <id>Q16288</id>
        <label>NTRK3</label>
    </interactant>
    <organismsDiffer>false</organismsDiffer>
    <experiments>2</experiments>
</comment>
<comment type="interaction">
    <interactant intactId="EBI-1028226">
        <id>P04629</id>
    </interactant>
    <interactant intactId="EBI-79464">
        <id>P27986</id>
        <label>PIK3R1</label>
    </interactant>
    <organismsDiffer>false</organismsDiffer>
    <experiments>4</experiments>
</comment>
<comment type="interaction">
    <interactant intactId="EBI-1028226">
        <id>P04629</id>
    </interactant>
    <interactant intactId="EBI-79387">
        <id>P19174</id>
        <label>PLCG1</label>
    </interactant>
    <organismsDiffer>false</organismsDiffer>
    <experiments>4</experiments>
</comment>
<comment type="interaction">
    <interactant intactId="EBI-1028226">
        <id>P04629</id>
    </interactant>
    <interactant intactId="EBI-968788">
        <id>P18031</id>
        <label>PTPN1</label>
    </interactant>
    <organismsDiffer>false</organismsDiffer>
    <experiments>2</experiments>
</comment>
<comment type="interaction">
    <interactant intactId="EBI-1028226">
        <id>P04629</id>
    </interactant>
    <interactant intactId="EBI-1057058">
        <id>Q99523</id>
        <label>SORT1</label>
    </interactant>
    <organismsDiffer>false</organismsDiffer>
    <experiments>3</experiments>
</comment>
<comment type="interaction">
    <interactant intactId="EBI-1028226">
        <id>P04629</id>
    </interactant>
    <interactant intactId="EBI-307104">
        <id>Q13501</id>
        <label>SQSTM1</label>
    </interactant>
    <organismsDiffer>false</organismsDiffer>
    <experiments>2</experiments>
</comment>
<comment type="interaction">
    <interactant intactId="EBI-1028226">
        <id>P04629</id>
    </interactant>
    <interactant intactId="EBI-908831">
        <id>O75385</id>
        <label>ULK1</label>
    </interactant>
    <organismsDiffer>false</organismsDiffer>
    <experiments>2</experiments>
</comment>
<comment type="interaction">
    <interactant intactId="EBI-1028226">
        <id>P04629</id>
    </interactant>
    <interactant intactId="EBI-8602514">
        <id>Q8K4V6</id>
        <label>Pirb</label>
    </interactant>
    <organismsDiffer>true</organismsDiffer>
    <experiments>2</experiments>
</comment>
<comment type="subcellular location">
    <subcellularLocation>
        <location evidence="20 22 23 33 37">Cell membrane</location>
        <topology evidence="20 22">Single-pass type I membrane protein</topology>
    </subcellularLocation>
    <subcellularLocation>
        <location evidence="2">Early endosome membrane</location>
        <topology evidence="2">Single-pass type I membrane protein</topology>
    </subcellularLocation>
    <subcellularLocation>
        <location evidence="2">Late endosome membrane</location>
        <topology evidence="2">Single-pass type I membrane protein</topology>
    </subcellularLocation>
    <subcellularLocation>
        <location evidence="2">Recycling endosome membrane</location>
        <topology evidence="2">Single-pass type I membrane protein</topology>
    </subcellularLocation>
    <text evidence="2 20">Rapidly internalized after NGF binding (PubMed:1281417). Internalized to endosomes upon binding of NGF or NTF3 and further transported to the cell body via a retrograde axonal transport. Localized at cell membrane and early endosomes before nerve growth factor (NGF) stimulation. Recruited to late endosomes after NGF stimulation. Colocalized with RAPGEF2 at late endosomes.</text>
</comment>
<comment type="alternative products">
    <event type="alternative splicing"/>
    <isoform>
        <id>P04629-1</id>
        <name>TrkA-II</name>
        <name>TrkAII</name>
        <sequence type="displayed"/>
    </isoform>
    <isoform>
        <id>P04629-2</id>
        <name>TrkA-I</name>
        <name>TrkAI</name>
        <sequence type="described" ref="VSP_002899"/>
    </isoform>
    <isoform>
        <id>P04629-3</id>
        <name>3</name>
        <sequence type="described" ref="VSP_041905 VSP_002899"/>
    </isoform>
    <isoform>
        <id>P04629-4</id>
        <name>TrkA-III</name>
        <name>TrkAIII</name>
        <sequence type="described" ref="VSP_042152 VSP_002899"/>
    </isoform>
    <text>TrkA-I and TrkA-II isoforms have similar biological properties but are differentially expressed.</text>
</comment>
<comment type="tissue specificity">
    <text evidence="22 41">Isoform TrkA-I is found in most non-neuronal tissues. Isoform TrkA-II is primarily expressed in neuronal cells. TrkA-III is specifically expressed by pluripotent neural stem and neural crest progenitors.</text>
</comment>
<comment type="induction">
    <text evidence="22">Isoform TrkA-III is up-regulated upon hypoxia in cells normally expressing it.</text>
</comment>
<comment type="domain">
    <text evidence="2">The transmembrane domain mediates interaction with KIDINS220.</text>
</comment>
<comment type="domain">
    <text evidence="2">The extracellular domain mediates interaction with NGFR.</text>
</comment>
<comment type="PTM">
    <text evidence="20 22 33 34 37 38 40 41">Ligand-mediated autophosphorylation (PubMed:1281417, PubMed:15488758, PubMed:27676246, PubMed:28177573, PubMed:2927393, PubMed:7510697, PubMed:8155326, PubMed:8325889). Interaction with SQSTM1 is phosphotyrosine-dependent. Autophosphorylation at Tyr-496 mediates interaction and phosphorylation of SHC1 (PubMed:15488758, PubMed:7510697, PubMed:8155326, PubMed:8325889).</text>
</comment>
<comment type="PTM">
    <text evidence="22 23 33 37">N-glycosylated (PubMed:2927393). Isoform TrkA-I and isoform TrkA-II are N-glycosylated.</text>
</comment>
<comment type="PTM">
    <text evidence="3 32">Ubiquitinated (PubMed:27445338). Undergoes polyubiquitination upon activation; regulated by NGFR (PubMed:27445338). Ubiquitination by NEDD4L leads to degradation (PubMed:27445338). Ubiquitination regulates the internalization of the receptor (By similarity).</text>
</comment>
<comment type="disease" evidence="8 9 10 14 15 16 17 19 25 29 33 34 35 42">
    <disease id="DI-01405">
        <name>Congenital insensitivity to pain with anhidrosis</name>
        <acronym>CIPA</acronym>
        <description>Characterized by a congenital insensitivity to pain, anhidrosis (absence of sweating), absence of reaction to noxious stimuli, self-mutilating behavior, and intellectual disability. This rare autosomal recessive disorder is also known as congenital sensory neuropathy with anhidrosis or hereditary sensory and autonomic neuropathy type IV or familial dysautonomia type II.</description>
        <dbReference type="MIM" id="256800"/>
    </disease>
    <text>The disease is caused by variants affecting the gene represented in this entry.</text>
</comment>
<comment type="disease">
    <text evidence="21 36 39">Chromosomal aberrations involving NTRK1 are found in papillary thyroid carcinomas (PTCs) (PubMed:1532241, PubMed:2869410, PubMed:7565764). Translocation t(1;3)(q21;q11) with TFG generates the TRKT3 (TRK-T3) transcript by fusing TFG to the 3'-end of NTRK1 (PubMed:7565764). A rearrangement with TPM3 generates the TRK transcript by fusing TPM3 to the 3'-end of NTRK1 (PubMed:2869410). An intrachromosomal rearrangement that links the protein kinase domain of NTRK1 to the 5'-end of the TPR gene forms the fusion protein TRK-T1. TRK-T1 is a 55 kDa protein reacting with antibodies against the C-terminus of the NTRK1 protein (PubMed:1532241).</text>
</comment>
<comment type="miscellaneous">
    <text>Trk also stands for tropomyosin-related kinase since it was first isolated as an oncogenic protein which was the result of a fusion between the tropomyosin gene TPM3 and NTRK1.</text>
</comment>
<comment type="miscellaneous">
    <molecule>Isoform TrkA-II</molecule>
    <text>Major isoform.</text>
</comment>
<comment type="miscellaneous">
    <molecule>Isoform TrkA-I</molecule>
    <text evidence="47">Has enhanced responsiveness to NTF3 neurotrophin.</text>
</comment>
<comment type="miscellaneous">
    <molecule>Isoform TrkA-III</molecule>
    <text evidence="47">Constitutively active. Does not bind NGF and does not interact with GRB2 and FRS2.</text>
</comment>
<comment type="similarity">
    <text evidence="6">Belongs to the protein kinase superfamily. Tyr protein kinase family. Insulin receptor subfamily.</text>
</comment>
<comment type="sequence caution" evidence="47">
    <conflict type="erroneous termination">
        <sequence resource="EMBL-CDS" id="CAA27243"/>
    </conflict>
    <text>Truncated C-terminus.</text>
</comment>
<comment type="sequence caution" evidence="47">
    <conflict type="frameshift">
        <sequence resource="EMBL-CDS" id="CAA27243"/>
    </conflict>
</comment>
<comment type="sequence caution" evidence="47">
    <conflict type="miscellaneous discrepancy">
        <sequence resource="EMBL-CDS" id="CAA27243"/>
    </conflict>
    <text>Contaminating sequence. Sequence of unknown origin in the N-terminal part.</text>
</comment>
<comment type="sequence caution" evidence="47">
    <conflict type="miscellaneous discrepancy">
        <sequence resource="EMBL-CDS" id="CAA29888"/>
    </conflict>
    <text>Contaminating sequence. Sequence of unknown origin in the N-terminal part.</text>
</comment>
<comment type="sequence caution" evidence="47">
    <conflict type="miscellaneous discrepancy">
        <sequence resource="EMBL-CDS" id="CAA44719"/>
    </conflict>
    <text>Contaminating sequence. Sequence of unknown origin in the N-terminal part.</text>
</comment>
<comment type="sequence caution" evidence="47">
    <conflict type="miscellaneous discrepancy">
        <sequence resource="EMBL-CDS" id="CAA59936"/>
    </conflict>
    <text>Contaminating sequence. Sequence of unknown origin in the N-terminal part.</text>
</comment>
<feature type="signal peptide" evidence="4">
    <location>
        <begin position="1"/>
        <end position="32"/>
    </location>
</feature>
<feature type="chain" id="PRO_0000016724" description="High affinity nerve growth factor receptor">
    <location>
        <begin position="33"/>
        <end position="796"/>
    </location>
</feature>
<feature type="topological domain" description="Extracellular" evidence="4">
    <location>
        <begin position="33"/>
        <end position="423"/>
    </location>
</feature>
<feature type="transmembrane region" description="Helical" evidence="4">
    <location>
        <begin position="424"/>
        <end position="439"/>
    </location>
</feature>
<feature type="topological domain" description="Cytoplasmic" evidence="4">
    <location>
        <begin position="440"/>
        <end position="796"/>
    </location>
</feature>
<feature type="repeat" description="LRR 1">
    <location>
        <begin position="90"/>
        <end position="113"/>
    </location>
</feature>
<feature type="repeat" description="LRR 2">
    <location>
        <begin position="116"/>
        <end position="137"/>
    </location>
</feature>
<feature type="domain" description="LRRCT">
    <location>
        <begin position="148"/>
        <end position="193"/>
    </location>
</feature>
<feature type="domain" description="Ig-like C2-type 1" evidence="5">
    <location>
        <begin position="194"/>
        <end position="283"/>
    </location>
</feature>
<feature type="domain" description="Ig-like C2-type 2" evidence="5">
    <location>
        <begin position="299"/>
        <end position="365"/>
    </location>
</feature>
<feature type="domain" description="Protein kinase" evidence="6">
    <location>
        <begin position="510"/>
        <end position="781"/>
    </location>
</feature>
<feature type="region of interest" description="Interaction with SQSTM1" evidence="1">
    <location>
        <begin position="469"/>
        <end position="490"/>
    </location>
</feature>
<feature type="short sequence motif" description="DXXLL" evidence="31">
    <location>
        <begin position="537"/>
        <end position="541"/>
    </location>
</feature>
<feature type="short sequence motif" description="DXXLL" evidence="31">
    <location>
        <begin position="607"/>
        <end position="611"/>
    </location>
</feature>
<feature type="active site" description="Proton acceptor" evidence="6 7">
    <location>
        <position position="650"/>
    </location>
</feature>
<feature type="binding site" evidence="6">
    <location>
        <begin position="516"/>
        <end position="524"/>
    </location>
    <ligand>
        <name>ATP</name>
        <dbReference type="ChEBI" id="CHEBI:30616"/>
    </ligand>
</feature>
<feature type="binding site" evidence="6">
    <location>
        <position position="544"/>
    </location>
    <ligand>
        <name>ATP</name>
        <dbReference type="ChEBI" id="CHEBI:30616"/>
    </ligand>
</feature>
<feature type="site" description="Breakpoint for translocation to form TRK and TRK-T3">
    <location>
        <begin position="398"/>
        <end position="399"/>
    </location>
</feature>
<feature type="site" description="Breakpoint for translocation to form TRK-T1">
    <location>
        <position position="486"/>
    </location>
</feature>
<feature type="site" description="Interaction with SHC1">
    <location>
        <position position="496"/>
    </location>
</feature>
<feature type="site" description="Interaction with PLCG1">
    <location>
        <position position="791"/>
    </location>
</feature>
<feature type="modified residue" description="Phosphotyrosine; by autocatalysis" evidence="22 33 40">
    <location>
        <position position="496"/>
    </location>
</feature>
<feature type="modified residue" description="Phosphotyrosine; by autocatalysis" evidence="40">
    <location>
        <position position="676"/>
    </location>
</feature>
<feature type="modified residue" description="Phosphotyrosine; by autocatalysis" evidence="22 40">
    <location>
        <position position="680"/>
    </location>
</feature>
<feature type="modified residue" description="Phosphotyrosine; by autocatalysis" evidence="22 40">
    <location>
        <position position="681"/>
    </location>
</feature>
<feature type="modified residue" description="Phosphotyrosine; by autocatalysis" evidence="22 38 40">
    <location>
        <position position="791"/>
    </location>
</feature>
<feature type="glycosylation site" description="N-linked (GlcNAc...) asparagine" evidence="4">
    <location>
        <position position="67"/>
    </location>
</feature>
<feature type="glycosylation site" description="N-linked (GlcNAc...) asparagine" evidence="23">
    <location>
        <position position="95"/>
    </location>
</feature>
<feature type="glycosylation site" description="N-linked (GlcNAc...) asparagine" evidence="23">
    <location>
        <position position="121"/>
    </location>
</feature>
<feature type="glycosylation site" description="N-linked (GlcNAc...) asparagine" evidence="23 51">
    <location>
        <position position="188"/>
    </location>
</feature>
<feature type="glycosylation site" description="N-linked (GlcNAc...) asparagine" evidence="4">
    <location>
        <position position="202"/>
    </location>
</feature>
<feature type="glycosylation site" description="N-linked (GlcNAc...) asparagine" evidence="4">
    <location>
        <position position="253"/>
    </location>
</feature>
<feature type="glycosylation site" description="N-linked (GlcNAc...) asparagine" evidence="23 51">
    <location>
        <position position="262"/>
    </location>
</feature>
<feature type="glycosylation site" description="N-linked (GlcNAc...) asparagine" evidence="23 51">
    <location>
        <position position="281"/>
    </location>
</feature>
<feature type="glycosylation site" description="N-linked (GlcNAc...) asparagine" evidence="4">
    <location>
        <position position="318"/>
    </location>
</feature>
<feature type="glycosylation site" description="N-linked (GlcNAc...) asparagine" evidence="4">
    <location>
        <position position="323"/>
    </location>
</feature>
<feature type="glycosylation site" description="N-linked (GlcNAc...) asparagine" evidence="4">
    <location>
        <position position="338"/>
    </location>
</feature>
<feature type="glycosylation site" description="N-linked (GlcNAc...) asparagine" evidence="23 51">
    <location>
        <position position="358"/>
    </location>
</feature>
<feature type="glycosylation site" description="N-linked (GlcNAc...) asparagine" evidence="4">
    <location>
        <position position="401"/>
    </location>
</feature>
<feature type="disulfide bond" evidence="51">
    <location>
        <begin position="36"/>
        <end position="41"/>
    </location>
</feature>
<feature type="disulfide bond" evidence="51">
    <location>
        <begin position="40"/>
        <end position="50"/>
    </location>
</feature>
<feature type="disulfide bond" evidence="5 23 51">
    <location>
        <begin position="154"/>
        <end position="191"/>
    </location>
</feature>
<feature type="disulfide bond" evidence="5 23 51">
    <location>
        <begin position="215"/>
        <end position="265"/>
    </location>
</feature>
<feature type="disulfide bond" evidence="48 49 50 51 52">
    <location>
        <begin position="300"/>
        <end position="345"/>
    </location>
</feature>
<feature type="splice variant" id="VSP_041905" description="In isoform 3." evidence="43">
    <original>MLRGGRRGQLGWHSWAAGPGSLLAWLILASAGAAPCPDACCPHGSSGLRCTRDGALDSLHHLPGAENLTEL</original>
    <variation>MKEAALICLAPSVPPILTVKSWDTMQLRAARSRCTNLLAAS</variation>
    <location>
        <begin position="1"/>
        <end position="71"/>
    </location>
</feature>
<feature type="splice variant" id="VSP_042152" description="In isoform TrkA-III." evidence="47">
    <original>GVPTLKVQVPNASVDVGDDVLLRCQVEGRGLEQAGWILTELEQSATVMKSGGLPSLGLTLANVTSDLNRKNVTCWAENDVGRAEVSVQVNVSF</original>
    <variation>V</variation>
    <location>
        <begin position="192"/>
        <end position="284"/>
    </location>
</feature>
<feature type="splice variant" id="VSP_002899" description="In isoform TrkA-I, isoform 3 and isoform TrkA-III." evidence="43 44 45">
    <location>
        <begin position="393"/>
        <end position="398"/>
    </location>
</feature>
<feature type="sequence variant" id="VAR_068480" description="In dbSNP:rs201472270." evidence="29">
    <original>R</original>
    <variation>W</variation>
    <location>
        <position position="6"/>
    </location>
</feature>
<feature type="sequence variant" id="VAR_049714" description="In dbSNP:rs1007211.">
    <original>G</original>
    <variation>E</variation>
    <location>
        <position position="18"/>
    </location>
</feature>
<feature type="sequence variant" id="VAR_041461" description="In dbSNP:rs55891455." evidence="24">
    <original>Q</original>
    <variation>R</variation>
    <location>
        <position position="80"/>
    </location>
</feature>
<feature type="sequence variant" id="VAR_009623" description="In dbSNP:rs543320028." evidence="10 17">
    <original>R</original>
    <variation>S</variation>
    <location>
        <position position="85"/>
    </location>
</feature>
<feature type="sequence variant" id="VAR_009624" description="In CIPA; aberrantly processed; shows diminished autophosphorylation in neuronal cells; dbSNP:rs1655828787." evidence="16 17">
    <original>L</original>
    <variation>P</variation>
    <location>
        <position position="93"/>
    </location>
</feature>
<feature type="sequence variant" id="VAR_041462" description="In an ovarian serous carcinoma sample; somatic mutation; dbSNP:rs540521894." evidence="24">
    <original>A</original>
    <variation>V</variation>
    <location>
        <position position="107"/>
    </location>
</feature>
<feature type="sequence variant" id="VAR_079399" description="In CIPA." evidence="35">
    <original>A</original>
    <variation>D</variation>
    <location>
        <position position="110"/>
    </location>
</feature>
<feature type="sequence variant" id="VAR_079400" description="In CIPA." evidence="35">
    <location>
        <begin position="146"/>
        <end position="796"/>
    </location>
</feature>
<feature type="sequence variant" id="VAR_079401" description="In CIPA." evidence="35">
    <location>
        <begin position="176"/>
        <end position="796"/>
    </location>
</feature>
<feature type="sequence variant" id="VAR_009625" description="In CIPA; aberrantly processed; shows diminished autophosphorylation in neuronal cells; dbSNP:rs747711259." evidence="10 17">
    <original>L</original>
    <variation>P</variation>
    <location>
        <position position="213"/>
    </location>
</feature>
<feature type="sequence variant" id="VAR_079402" description="In CIPA; loss of protein." evidence="34">
    <location>
        <begin position="235"/>
        <end position="796"/>
    </location>
</feature>
<feature type="sequence variant" id="VAR_041463" description="In dbSNP:rs55909005." evidence="24">
    <original>T</original>
    <variation>M</variation>
    <location>
        <position position="237"/>
    </location>
</feature>
<feature type="sequence variant" id="VAR_041464" description="In dbSNP:rs56000394." evidence="24">
    <original>V</original>
    <variation>G</variation>
    <location>
        <position position="238"/>
    </location>
</feature>
<feature type="sequence variant" id="VAR_041465" description="In dbSNP:rs35116695." evidence="24">
    <original>R</original>
    <variation>G</variation>
    <location>
        <position position="260"/>
    </location>
</feature>
<feature type="sequence variant" id="VAR_068481" description="In CIPA; dbSNP:rs121964869." evidence="19">
    <original>Y</original>
    <variation>C</variation>
    <location>
        <position position="359"/>
    </location>
</feature>
<feature type="sequence variant" id="VAR_041466" description="In dbSNP:rs56320207." evidence="24">
    <original>R</original>
    <variation>Q</variation>
    <location>
        <position position="444"/>
    </location>
</feature>
<feature type="sequence variant" id="VAR_041467" description="In dbSNP:rs34900547." evidence="24">
    <original>R</original>
    <variation>C</variation>
    <location>
        <position position="452"/>
    </location>
</feature>
<feature type="sequence variant" id="VAR_079403" description="In CIPA." evidence="35">
    <location>
        <begin position="476"/>
        <end position="796"/>
    </location>
</feature>
<feature type="sequence variant" id="VAR_068482" description="In CIPA; dbSNP:rs144901788." evidence="29">
    <original>E</original>
    <variation>K</variation>
    <location>
        <position position="492"/>
    </location>
</feature>
<feature type="sequence variant" id="VAR_077472" description="In CIPA; following transfection in neuroblastoma cells and NGF treatment, small decrease in the percentage of cells differentiated into neuronal phenotype, but in differentiated cells, the average neurite length is comparable to wild-type; no effect on N-glycosylation, subcellular location, nor on basal and NGF-induced autophosphorylation; loss of NGF-stimulated calcium flux; dbSNP:rs606231467." evidence="33">
    <original>G</original>
    <variation>E</variation>
    <location>
        <position position="517"/>
    </location>
</feature>
<feature type="sequence variant" id="VAR_077473" description="In CIPA; no effect on N-glycosylation, nor on subcellular location; reduced basal autophosphorylation and complete loss of NGF-induced autophosphorylation; loss of NGF-stimulated calcium flux; dbSNP:rs2102917490." evidence="33">
    <original>G</original>
    <variation>E</variation>
    <location>
        <position position="522"/>
    </location>
</feature>
<feature type="sequence variant" id="VAR_009626" description="In CIPA; processed as wild-type but shows significantly diminished autophosphorylation in both neuronal and non-neuronal cells; dbSNP:rs1571699266." evidence="16 17">
    <original>G</original>
    <variation>R</variation>
    <location>
        <position position="522"/>
    </location>
</feature>
<feature type="sequence variant" id="VAR_041468" description="In dbSNP:rs55892037." evidence="24">
    <original>M</original>
    <variation>T</variation>
    <location>
        <position position="566"/>
    </location>
</feature>
<feature type="sequence variant" id="VAR_077474" description="In CIPA." evidence="25">
    <original>I</original>
    <variation>S</variation>
    <location>
        <position position="572"/>
    </location>
</feature>
<feature type="sequence variant" id="VAR_004103" description="In CIPA; loss of function; processed as wild-type but shows significantly diminished autophosphorylation in both neuronal and non-neuronal cells; dbSNP:rs121964866." evidence="14 16 17 42">
    <original>G</original>
    <variation>R</variation>
    <location>
        <position position="577"/>
    </location>
</feature>
<feature type="sequence variant" id="VAR_009627" description="In CIPA; dbSNP:rs121964870." evidence="9">
    <original>M</original>
    <variation>V</variation>
    <location>
        <position position="587"/>
    </location>
</feature>
<feature type="sequence variant" id="VAR_079404" description="In CIPA; abolishes autophosphorylation; dbSNP:rs2102920017." evidence="34">
    <original>D</original>
    <variation>N</variation>
    <location>
        <position position="596"/>
    </location>
</feature>
<feature type="sequence variant" id="VAR_009628" description="In dbSNP:rs6336." evidence="10 11 12 17 19 24">
    <original>H</original>
    <variation>Y</variation>
    <location>
        <position position="604"/>
    </location>
</feature>
<feature type="sequence variant" id="VAR_009629" description="In dbSNP:rs6339." evidence="10 11 12 15 17 19 24">
    <original>G</original>
    <variation>V</variation>
    <location>
        <position position="613"/>
    </location>
</feature>
<feature type="sequence variant" id="VAR_079405" description="In CIPA; dbSNP:rs786205449." evidence="35">
    <original>R</original>
    <variation>Q</variation>
    <location>
        <position position="649"/>
    </location>
</feature>
<feature type="sequence variant" id="VAR_009630" description="In CIPA; processed as wild-type but shows significantly diminished autophosphorylation in both neuronal and non-neuronal cells; dbSNP:rs369353892." evidence="10 17">
    <original>R</original>
    <variation>W</variation>
    <location>
        <position position="649"/>
    </location>
</feature>
<feature type="sequence variant" id="VAR_009631" description="In CIPA; processed as wild-type but shows significantly diminished autophosphorylation in both neuronal and non-neuronal cells; dbSNP:rs764992664." evidence="16 17 29">
    <original>R</original>
    <variation>C</variation>
    <location>
        <position position="654"/>
    </location>
</feature>
<feature type="sequence variant" id="VAR_077475" description="In CIPA; following transfection in neuroblastoma cells and NGF treatment, loss of differentiation into neuronal phenotype; partially decreased N-glycosylation; reduced expression at the plasma membrane; reduced basal autophosphorylation and complete loss of NGF-induced autophosphorylation; loss of NGF-stimulated calcium flux." evidence="33">
    <original>L</original>
    <variation>P</variation>
    <location>
        <position position="657"/>
    </location>
</feature>
<feature type="sequence variant" id="VAR_009632" description="In CIPA; might impair the function of the enzyme without compromising autophosphorylation; dbSNP:rs80356677." evidence="16 17 34">
    <original>D</original>
    <variation>Y</variation>
    <location>
        <position position="674"/>
    </location>
</feature>
<feature type="sequence variant" id="VAR_009633" description="In CIPA; dbSNP:rs121964868." evidence="15">
    <original>P</original>
    <variation>L</variation>
    <location>
        <position position="695"/>
    </location>
</feature>
<feature type="sequence variant" id="VAR_077476" description="In CIPA; partially decreased N-glycosylation; reduced expression at the plasma membrane; reduced basal autophosphorylation and complete loss of NGF-induced autophosphorylation; loss of NGF-stimulated calcium flux; dbSNP:rs2102927321." evidence="33">
    <original>I</original>
    <variation>T</variation>
    <location>
        <position position="699"/>
    </location>
</feature>
<feature type="sequence variant" id="VAR_079406" description="In CIPA; dbSNP:rs2102927340." evidence="35">
    <original>L</original>
    <variation>P</variation>
    <location>
        <position position="700"/>
    </location>
</feature>
<feature type="sequence variant" id="VAR_009634" description="In CIPA; processed as wild-type but shows significantly diminished autophosphorylation in both neuronal and non-neuronal cells; dbSNP:rs770727871." evidence="10 17">
    <original>G</original>
    <variation>S</variation>
    <location>
        <position position="714"/>
    </location>
</feature>
<feature type="sequence variant" id="VAR_077477" description="In CIPA." evidence="25">
    <original>L</original>
    <variation>R</variation>
    <location>
        <position position="717"/>
    </location>
</feature>
<feature type="sequence variant" id="VAR_077478" description="In CIPA; uncertain significance; following transfection in neuroblastoma cells and NGF treatment, no effect on neurite outgrowth, nor neurite length; no effect on N-glycosylation, subcellular location, basal and NGF-induced autophosphorylation, nor on NGF-stimulated calcium flux; dbSNP:rs2102930811." evidence="33">
    <original>C</original>
    <variation>S</variation>
    <location>
        <position position="752"/>
    </location>
</feature>
<feature type="sequence variant" id="VAR_077479" description="In CIPA; following transfection in neuroblastoma cells and NGF treatment, decreased percentage of cells differentiated into neuronal phenotype and reduced neurite length compared with wild-type; slightly decreased N-glycosylation; reduced expression at the plasma membrane; reduced basal and NGF-induced autophosphorylation; small reduction in NGF-stimulated calcium flux; dbSNP:rs2102931057." evidence="33">
    <original>C</original>
    <variation>S</variation>
    <location>
        <position position="763"/>
    </location>
</feature>
<feature type="sequence variant" id="VAR_077480" description="In CIPA; partially decreased N-glycosylation; reduced expression at the plasma membrane; reduced basal autophosphorylation and complete loss of NGF-induced autophosphorylation; loss of NGF-stimulated calcium flux; dbSNP:rs1324983370." evidence="33">
    <original>R</original>
    <variation>C</variation>
    <location>
        <position position="771"/>
    </location>
</feature>
<feature type="sequence variant" id="VAR_009635" description="In CIPA; loss of function; dbSNP:rs35669708." evidence="8">
    <original>R</original>
    <variation>P</variation>
    <location>
        <position position="780"/>
    </location>
</feature>
<feature type="sequence variant" id="VAR_009636" description="In dbSNP:rs35669708." evidence="12 24">
    <original>R</original>
    <variation>Q</variation>
    <location>
        <position position="780"/>
    </location>
</feature>
<feature type="sequence variant" id="VAR_041469" description="In dbSNP:rs55948542." evidence="24">
    <original>V</original>
    <variation>I</variation>
    <location>
        <position position="790"/>
    </location>
</feature>
<feature type="mutagenesis site" description="Loss of interaction with SHC1 and altered phosphorylation of SHC1. Altered neurite outgrowth and altered activation of the MAPK pathway; when associated with F-791." evidence="40">
    <original>Y</original>
    <variation>F</variation>
    <location>
        <position position="496"/>
    </location>
</feature>
<feature type="mutagenesis site" description="Abolishes interaction with GGA3." evidence="31">
    <original>LV</original>
    <variation>AA</variation>
    <location>
        <begin position="540"/>
        <end position="541"/>
    </location>
</feature>
<feature type="mutagenesis site" description="No effect on interaction with GGA3." evidence="31">
    <original>K</original>
    <variation>A</variation>
    <location>
        <position position="544"/>
    </location>
</feature>
<feature type="mutagenesis site" description="Loss of kinase activity." evidence="20 40">
    <original>K</original>
    <variation>N</variation>
    <location>
        <position position="544"/>
    </location>
</feature>
<feature type="mutagenesis site" description="No effect on interaction with GGA3." evidence="31">
    <original>LL</original>
    <variation>AA</variation>
    <location>
        <begin position="610"/>
        <end position="611"/>
    </location>
</feature>
<feature type="mutagenesis site" description="Loss of interaction with PLCG1 and altered phosphorylation of PLCG1. Altered neurite outgrowth and altered activation of the MAPK pathway; when associated with F-496." evidence="38 40">
    <original>Y</original>
    <variation>F</variation>
    <location>
        <position position="791"/>
    </location>
</feature>
<feature type="sequence conflict" description="In Ref. 1; AAA36770." evidence="47" ref="1">
    <original>V</original>
    <variation>L</variation>
    <location>
        <position position="263"/>
    </location>
</feature>
<feature type="sequence conflict" description="In Ref. 1; AAA36770." evidence="47" ref="1">
    <original>C</original>
    <variation>S</variation>
    <location>
        <position position="300"/>
    </location>
</feature>
<feature type="sequence conflict" description="In Ref. 10; CAA59936." evidence="47" ref="10">
    <original>C</original>
    <variation>S</variation>
    <location>
        <position position="529"/>
    </location>
</feature>
<feature type="strand" evidence="62">
    <location>
        <begin position="37"/>
        <end position="43"/>
    </location>
</feature>
<feature type="turn" evidence="62">
    <location>
        <begin position="44"/>
        <end position="46"/>
    </location>
</feature>
<feature type="strand" evidence="62">
    <location>
        <begin position="47"/>
        <end position="50"/>
    </location>
</feature>
<feature type="helix" evidence="62">
    <location>
        <begin position="55"/>
        <end position="59"/>
    </location>
</feature>
<feature type="helix" evidence="62">
    <location>
        <begin position="65"/>
        <end position="67"/>
    </location>
</feature>
<feature type="strand" evidence="62">
    <location>
        <begin position="70"/>
        <end position="74"/>
    </location>
</feature>
<feature type="strand" evidence="62">
    <location>
        <begin position="80"/>
        <end position="82"/>
    </location>
</feature>
<feature type="helix" evidence="62">
    <location>
        <begin position="84"/>
        <end position="87"/>
    </location>
</feature>
<feature type="strand" evidence="62">
    <location>
        <begin position="95"/>
        <end position="101"/>
    </location>
</feature>
<feature type="turn" evidence="62">
    <location>
        <begin position="108"/>
        <end position="113"/>
    </location>
</feature>
<feature type="strand" evidence="62">
    <location>
        <begin position="119"/>
        <end position="121"/>
    </location>
</feature>
<feature type="helix" evidence="62">
    <location>
        <begin position="132"/>
        <end position="135"/>
    </location>
</feature>
<feature type="strand" evidence="62">
    <location>
        <begin position="141"/>
        <end position="144"/>
    </location>
</feature>
<feature type="helix" evidence="62">
    <location>
        <begin position="154"/>
        <end position="156"/>
    </location>
</feature>
<feature type="helix" evidence="62">
    <location>
        <begin position="157"/>
        <end position="165"/>
    </location>
</feature>
<feature type="helix" evidence="62">
    <location>
        <begin position="170"/>
        <end position="173"/>
    </location>
</feature>
<feature type="strand" evidence="62">
    <location>
        <begin position="180"/>
        <end position="182"/>
    </location>
</feature>
<feature type="helix" evidence="62">
    <location>
        <begin position="183"/>
        <end position="185"/>
    </location>
</feature>
<feature type="strand" evidence="62">
    <location>
        <begin position="195"/>
        <end position="199"/>
    </location>
</feature>
<feature type="strand" evidence="62">
    <location>
        <begin position="211"/>
        <end position="218"/>
    </location>
</feature>
<feature type="strand" evidence="62">
    <location>
        <begin position="224"/>
        <end position="229"/>
    </location>
</feature>
<feature type="strand" evidence="62">
    <location>
        <begin position="234"/>
        <end position="243"/>
    </location>
</feature>
<feature type="strand" evidence="62">
    <location>
        <begin position="246"/>
        <end position="253"/>
    </location>
</feature>
<feature type="helix" evidence="62">
    <location>
        <begin position="256"/>
        <end position="258"/>
    </location>
</feature>
<feature type="strand" evidence="62">
    <location>
        <begin position="263"/>
        <end position="268"/>
    </location>
</feature>
<feature type="strand" evidence="62">
    <location>
        <begin position="273"/>
        <end position="278"/>
    </location>
</feature>
<feature type="strand" evidence="62">
    <location>
        <begin position="282"/>
        <end position="290"/>
    </location>
</feature>
<feature type="strand" evidence="62">
    <location>
        <begin position="294"/>
        <end position="309"/>
    </location>
</feature>
<feature type="strand" evidence="62">
    <location>
        <begin position="312"/>
        <end position="317"/>
    </location>
</feature>
<feature type="strand" evidence="65">
    <location>
        <begin position="320"/>
        <end position="323"/>
    </location>
</feature>
<feature type="strand" evidence="62">
    <location>
        <begin position="326"/>
        <end position="332"/>
    </location>
</feature>
<feature type="strand" evidence="62">
    <location>
        <begin position="342"/>
        <end position="350"/>
    </location>
</feature>
<feature type="helix" evidence="62">
    <location>
        <begin position="353"/>
        <end position="355"/>
    </location>
</feature>
<feature type="strand" evidence="62">
    <location>
        <begin position="357"/>
        <end position="365"/>
    </location>
</feature>
<feature type="strand" evidence="62">
    <location>
        <begin position="368"/>
        <end position="376"/>
    </location>
</feature>
<feature type="helix" evidence="54">
    <location>
        <begin position="418"/>
        <end position="441"/>
    </location>
</feature>
<feature type="strand" evidence="60">
    <location>
        <begin position="476"/>
        <end position="478"/>
    </location>
</feature>
<feature type="helix" evidence="59">
    <location>
        <begin position="490"/>
        <end position="492"/>
    </location>
</feature>
<feature type="turn" evidence="53">
    <location>
        <begin position="494"/>
        <end position="496"/>
    </location>
</feature>
<feature type="helix" evidence="63">
    <location>
        <begin position="498"/>
        <end position="501"/>
    </location>
</feature>
<feature type="helix" evidence="58">
    <location>
        <begin position="507"/>
        <end position="509"/>
    </location>
</feature>
<feature type="strand" evidence="58">
    <location>
        <begin position="510"/>
        <end position="517"/>
    </location>
</feature>
<feature type="strand" evidence="58">
    <location>
        <begin position="520"/>
        <end position="522"/>
    </location>
</feature>
<feature type="strand" evidence="58">
    <location>
        <begin position="524"/>
        <end position="533"/>
    </location>
</feature>
<feature type="turn" evidence="59">
    <location>
        <begin position="534"/>
        <end position="536"/>
    </location>
</feature>
<feature type="strand" evidence="58">
    <location>
        <begin position="537"/>
        <end position="545"/>
    </location>
</feature>
<feature type="helix" evidence="58">
    <location>
        <begin position="552"/>
        <end position="566"/>
    </location>
</feature>
<feature type="strand" evidence="58">
    <location>
        <begin position="575"/>
        <end position="579"/>
    </location>
</feature>
<feature type="strand" evidence="58">
    <location>
        <begin position="581"/>
        <end position="584"/>
    </location>
</feature>
<feature type="strand" evidence="58">
    <location>
        <begin position="586"/>
        <end position="590"/>
    </location>
</feature>
<feature type="helix" evidence="58">
    <location>
        <begin position="597"/>
        <end position="603"/>
    </location>
</feature>
<feature type="strand" evidence="55">
    <location>
        <begin position="605"/>
        <end position="607"/>
    </location>
</feature>
<feature type="helix" evidence="56">
    <location>
        <begin position="608"/>
        <end position="611"/>
    </location>
</feature>
<feature type="strand" evidence="61">
    <location>
        <begin position="615"/>
        <end position="617"/>
    </location>
</feature>
<feature type="strand" evidence="59">
    <location>
        <begin position="619"/>
        <end position="621"/>
    </location>
</feature>
<feature type="helix" evidence="58">
    <location>
        <begin position="624"/>
        <end position="643"/>
    </location>
</feature>
<feature type="strand" evidence="60">
    <location>
        <begin position="646"/>
        <end position="648"/>
    </location>
</feature>
<feature type="helix" evidence="58">
    <location>
        <begin position="653"/>
        <end position="655"/>
    </location>
</feature>
<feature type="strand" evidence="58">
    <location>
        <begin position="656"/>
        <end position="659"/>
    </location>
</feature>
<feature type="helix" evidence="58">
    <location>
        <begin position="660"/>
        <end position="662"/>
    </location>
</feature>
<feature type="strand" evidence="58">
    <location>
        <begin position="663"/>
        <end position="666"/>
    </location>
</feature>
<feature type="helix" evidence="59">
    <location>
        <begin position="672"/>
        <end position="675"/>
    </location>
</feature>
<feature type="helix" evidence="56">
    <location>
        <begin position="677"/>
        <end position="679"/>
    </location>
</feature>
<feature type="strand" evidence="59">
    <location>
        <begin position="680"/>
        <end position="683"/>
    </location>
</feature>
<feature type="turn" evidence="59">
    <location>
        <begin position="684"/>
        <end position="686"/>
    </location>
</feature>
<feature type="strand" evidence="59">
    <location>
        <begin position="687"/>
        <end position="689"/>
    </location>
</feature>
<feature type="helix" evidence="58">
    <location>
        <begin position="691"/>
        <end position="693"/>
    </location>
</feature>
<feature type="helix" evidence="58">
    <location>
        <begin position="696"/>
        <end position="701"/>
    </location>
</feature>
<feature type="helix" evidence="58">
    <location>
        <begin position="706"/>
        <end position="721"/>
    </location>
</feature>
<feature type="turn" evidence="57">
    <location>
        <begin position="722"/>
        <end position="724"/>
    </location>
</feature>
<feature type="turn" evidence="58">
    <location>
        <begin position="727"/>
        <end position="730"/>
    </location>
</feature>
<feature type="helix" evidence="58">
    <location>
        <begin position="733"/>
        <end position="742"/>
    </location>
</feature>
<feature type="turn" evidence="64">
    <location>
        <begin position="749"/>
        <end position="751"/>
    </location>
</feature>
<feature type="helix" evidence="58">
    <location>
        <begin position="754"/>
        <end position="763"/>
    </location>
</feature>
<feature type="helix" evidence="58">
    <location>
        <begin position="768"/>
        <end position="770"/>
    </location>
</feature>
<feature type="helix" evidence="58">
    <location>
        <begin position="774"/>
        <end position="786"/>
    </location>
</feature>
<feature type="helix" evidence="59">
    <location>
        <begin position="789"/>
        <end position="793"/>
    </location>
</feature>
<sequence>MLRGGRRGQLGWHSWAAGPGSLLAWLILASAGAAPCPDACCPHGSSGLRCTRDGALDSLHHLPGAENLTELYIENQQHLQHLELRDLRGLGELRNLTIVKSGLRFVAPDAFHFTPRLSRLNLSFNALESLSWKTVQGLSLQELVLSGNPLHCSCALRWLQRWEEEGLGGVPEQKLQCHGQGPLAHMPNASCGVPTLKVQVPNASVDVGDDVLLRCQVEGRGLEQAGWILTELEQSATVMKSGGLPSLGLTLANVTSDLNRKNVTCWAENDVGRAEVSVQVNVSFPASVQLHTAVEMHHWCIPFSVDGQPAPSLRWLFNGSVLNETSFIFTEFLEPAANETVRHGCLRLNQPTHVNNGNYTLLAANPFGQASASIMAAFMDNPFEFNPEDPIPVSFSPVDTNSTSGDPVEKKDETPFGVSVAVGLAVFACLFLSTLLLVLNKCGRRNKFGINRPAVLAPEDGLAMSLHFMTLGGSSLSPTEGKGSGLQGHIIENPQYFSDACVHHIKRRDIVLKWELGEGAFGKVFLAECHNLLPEQDKMLVAVKALKEASESARQDFQREAELLTMLQHQHIVRFFGVCTEGRPLLMVFEYMRHGDLNRFLRSHGPDAKLLAGGEDVAPGPLGLGQLLAVASQVAAGMVYLAGLHFVHRDLATRNCLVGQGLVVKIGDFGMSRDIYSTDYYRVGGRTMLPIRWMPPESILYRKFTTESDVWSFGVVLWEIFTYGKQPWYQLSNTEAIDCITQGRELERPRACPPEVYAIMRGCWQREPQQRHSIKDVHARLQALAQAPPVYLDVLG</sequence>
<gene>
    <name type="primary">NTRK1</name>
    <name type="synonym">MTC</name>
    <name evidence="45" type="synonym">TRK</name>
    <name evidence="46" type="synonym">TRKA</name>
</gene>
<name>NTRK1_HUMAN</name>
<proteinExistence type="evidence at protein level"/>
<protein>
    <recommendedName>
        <fullName>High affinity nerve growth factor receptor</fullName>
        <ecNumber evidence="20 37">2.7.10.1</ecNumber>
    </recommendedName>
    <alternativeName>
        <fullName>Neurotrophic tyrosine kinase receptor type 1</fullName>
    </alternativeName>
    <alternativeName>
        <fullName>TRK1-transforming tyrosine kinase protein</fullName>
    </alternativeName>
    <alternativeName>
        <fullName>Tropomyosin-related kinase A</fullName>
    </alternativeName>
    <alternativeName>
        <fullName>Tyrosine kinase receptor</fullName>
    </alternativeName>
    <alternativeName>
        <fullName>Tyrosine kinase receptor A</fullName>
        <shortName>Trk-A</shortName>
    </alternativeName>
    <alternativeName>
        <fullName evidence="45">gp140trk</fullName>
    </alternativeName>
    <alternativeName>
        <fullName>p140-TrkA</fullName>
    </alternativeName>
</protein>
<accession>P04629</accession>
<accession>B2R6T5</accession>
<accession>B7ZM34</accession>
<accession>P08119</accession>
<accession>Q15655</accession>
<accession>Q15656</accession>
<accession>Q5D056</accession>
<accession>Q5VZS2</accession>
<accession>Q7Z5C3</accession>
<accession>Q9UIU7</accession>